<evidence type="ECO:0000250" key="1">
    <source>
        <dbReference type="UniProtKB" id="Q64610"/>
    </source>
</evidence>
<evidence type="ECO:0000250" key="2">
    <source>
        <dbReference type="UniProtKB" id="Q9R1E6"/>
    </source>
</evidence>
<evidence type="ECO:0000255" key="3"/>
<evidence type="ECO:0000255" key="4">
    <source>
        <dbReference type="PROSITE-ProRule" id="PRU00350"/>
    </source>
</evidence>
<evidence type="ECO:0000269" key="5">
    <source>
    </source>
</evidence>
<evidence type="ECO:0000269" key="6">
    <source>
    </source>
</evidence>
<evidence type="ECO:0000269" key="7">
    <source>
    </source>
</evidence>
<evidence type="ECO:0000269" key="8">
    <source>
    </source>
</evidence>
<evidence type="ECO:0000269" key="9">
    <source>
    </source>
</evidence>
<evidence type="ECO:0000269" key="10">
    <source>
    </source>
</evidence>
<evidence type="ECO:0000269" key="11">
    <source>
    </source>
</evidence>
<evidence type="ECO:0000269" key="12">
    <source>
    </source>
</evidence>
<evidence type="ECO:0000269" key="13">
    <source>
    </source>
</evidence>
<evidence type="ECO:0000269" key="14">
    <source>
    </source>
</evidence>
<evidence type="ECO:0000269" key="15">
    <source>
    </source>
</evidence>
<evidence type="ECO:0000269" key="16">
    <source>
    </source>
</evidence>
<evidence type="ECO:0000269" key="17">
    <source>
    </source>
</evidence>
<evidence type="ECO:0000269" key="18">
    <source>
    </source>
</evidence>
<evidence type="ECO:0000269" key="19">
    <source>
    </source>
</evidence>
<evidence type="ECO:0000269" key="20">
    <source>
    </source>
</evidence>
<evidence type="ECO:0000269" key="21">
    <source>
    </source>
</evidence>
<evidence type="ECO:0000303" key="22">
    <source>
    </source>
</evidence>
<evidence type="ECO:0000303" key="23">
    <source>
    </source>
</evidence>
<evidence type="ECO:0000303" key="24">
    <source>
    </source>
</evidence>
<evidence type="ECO:0000303" key="25">
    <source>
    </source>
</evidence>
<evidence type="ECO:0000303" key="26">
    <source>
    </source>
</evidence>
<evidence type="ECO:0000305" key="27"/>
<evidence type="ECO:0000305" key="28">
    <source>
    </source>
</evidence>
<evidence type="ECO:0000305" key="29">
    <source>
    </source>
</evidence>
<evidence type="ECO:0000305" key="30">
    <source>
    </source>
</evidence>
<evidence type="ECO:0000305" key="31">
    <source>
    </source>
</evidence>
<evidence type="ECO:0000305" key="32">
    <source>
    </source>
</evidence>
<evidence type="ECO:0000305" key="33">
    <source>
    </source>
</evidence>
<evidence type="ECO:0000305" key="34">
    <source>
    </source>
</evidence>
<evidence type="ECO:0000312" key="35">
    <source>
        <dbReference type="HGNC" id="HGNC:3357"/>
    </source>
</evidence>
<evidence type="ECO:0007744" key="36">
    <source>
        <dbReference type="PDB" id="4ZG6"/>
    </source>
</evidence>
<evidence type="ECO:0007744" key="37">
    <source>
        <dbReference type="PDB" id="4ZG7"/>
    </source>
</evidence>
<evidence type="ECO:0007744" key="38">
    <source>
        <dbReference type="PDB" id="4ZG9"/>
    </source>
</evidence>
<evidence type="ECO:0007744" key="39">
    <source>
        <dbReference type="PDB" id="4ZGA"/>
    </source>
</evidence>
<evidence type="ECO:0007744" key="40">
    <source>
        <dbReference type="PDB" id="5KXA"/>
    </source>
</evidence>
<evidence type="ECO:0007744" key="41">
    <source>
        <dbReference type="PDB" id="5M7M"/>
    </source>
</evidence>
<evidence type="ECO:0007744" key="42">
    <source>
        <dbReference type="PDB" id="5MHP"/>
    </source>
</evidence>
<evidence type="ECO:0007829" key="43">
    <source>
        <dbReference type="PDB" id="4ZG6"/>
    </source>
</evidence>
<evidence type="ECO:0007829" key="44">
    <source>
        <dbReference type="PDB" id="4ZG7"/>
    </source>
</evidence>
<evidence type="ECO:0007829" key="45">
    <source>
        <dbReference type="PDB" id="4ZG9"/>
    </source>
</evidence>
<evidence type="ECO:0007829" key="46">
    <source>
        <dbReference type="PDB" id="4ZGA"/>
    </source>
</evidence>
<evidence type="ECO:0007829" key="47">
    <source>
        <dbReference type="PDB" id="5M7M"/>
    </source>
</evidence>
<evidence type="ECO:0007829" key="48">
    <source>
        <dbReference type="PDB" id="8C3O"/>
    </source>
</evidence>
<evidence type="ECO:0007829" key="49">
    <source>
        <dbReference type="PDB" id="8C3P"/>
    </source>
</evidence>
<gene>
    <name evidence="35" type="primary">ENPP2</name>
    <name evidence="23 24" type="synonym">ATX</name>
    <name evidence="26" type="synonym">PDNP2</name>
</gene>
<proteinExistence type="evidence at protein level"/>
<organism>
    <name type="scientific">Homo sapiens</name>
    <name type="common">Human</name>
    <dbReference type="NCBI Taxonomy" id="9606"/>
    <lineage>
        <taxon>Eukaryota</taxon>
        <taxon>Metazoa</taxon>
        <taxon>Chordata</taxon>
        <taxon>Craniata</taxon>
        <taxon>Vertebrata</taxon>
        <taxon>Euteleostomi</taxon>
        <taxon>Mammalia</taxon>
        <taxon>Eutheria</taxon>
        <taxon>Euarchontoglires</taxon>
        <taxon>Primates</taxon>
        <taxon>Haplorrhini</taxon>
        <taxon>Catarrhini</taxon>
        <taxon>Hominidae</taxon>
        <taxon>Homo</taxon>
    </lineage>
</organism>
<reference key="1">
    <citation type="journal article" date="1994" name="J. Biol. Chem.">
        <title>cDNA cloning of the human tumor motility-stimulating protein, autotaxin, reveals a homology with phosphodiesterases.</title>
        <authorList>
            <person name="Murata J."/>
            <person name="Lee H.Y."/>
            <person name="Clair T."/>
            <person name="Krutzsch H.C."/>
            <person name="Arestad A.A."/>
            <person name="Sobel M.E."/>
            <person name="Liotta L.A."/>
            <person name="Stracke M.L."/>
        </authorList>
    </citation>
    <scope>NUCLEOTIDE SEQUENCE [MRNA] (ISOFORM 2)</scope>
    <scope>PARTIAL PROTEIN SEQUENCE</scope>
    <scope>CHARACTERIZATION</scope>
    <scope>VARIANT PRO-493</scope>
    <source>
        <tissue>Melanoma</tissue>
    </source>
</reference>
<reference key="2">
    <citation type="journal article" date="1995" name="Genomics">
        <title>Molecular cloning and chromosomal assignment of the human brain-type phosphodiesterase I/nucleotide pyrophosphatase gene (PDNP2).</title>
        <authorList>
            <person name="Kawagoe H."/>
            <person name="Soma O."/>
            <person name="Goji J."/>
            <person name="Nishimura N."/>
            <person name="Narita M."/>
            <person name="Inazawa J."/>
            <person name="Nakamura H."/>
            <person name="Sano K."/>
        </authorList>
    </citation>
    <scope>NUCLEOTIDE SEQUENCE [MRNA] (ISOFORM 1)</scope>
    <scope>NUCLEOTIDE SEQUENCE [GENOMIC DNA] OF 1-45</scope>
    <scope>TISSUE SPECIFICITY</scope>
    <scope>VARIANT PRO-493</scope>
</reference>
<reference key="3">
    <citation type="journal article" date="1996" name="Biochem. Biophys. Res. Commun.">
        <title>Cloning, chromosomal localization, and tissue expression of autotaxin from human teratocarcinoma cells.</title>
        <authorList>
            <person name="Lee H.Y."/>
            <person name="Murata J."/>
            <person name="Clair T."/>
            <person name="Polymeropoulos M.H."/>
            <person name="Torres R."/>
            <person name="Manrow R.E."/>
            <person name="Liotta L.A."/>
            <person name="Stracke M.L."/>
        </authorList>
    </citation>
    <scope>NUCLEOTIDE SEQUENCE [MRNA] (ISOFORM 1)</scope>
    <scope>TISSUE SPECIFICITY</scope>
    <scope>VARIANT PRO-493</scope>
    <source>
        <tissue>Teratocarcinoma</tissue>
    </source>
</reference>
<reference key="4">
    <citation type="journal article" date="2005" name="J. Biol. Chem.">
        <title>Inhibition of autotaxin by lysophosphatidic acid and sphingosine 1-phosphate.</title>
        <authorList>
            <person name="van Meeteren L.A."/>
            <person name="Ruurs P."/>
            <person name="Christodoulou E."/>
            <person name="Goding J.W."/>
            <person name="Takakusa H."/>
            <person name="Kikuchi K."/>
            <person name="Perrakis A."/>
            <person name="Nagano T."/>
            <person name="Moolenaar W.H."/>
        </authorList>
    </citation>
    <scope>NUCLEOTIDE SEQUENCE [MRNA] (ISOFORM 1)</scope>
    <scope>CATALYTIC ACTIVITY</scope>
    <scope>SUBCELLULAR LOCATION</scope>
    <scope>ACTIVITY REGULATION</scope>
    <scope>VARIANT PRO-493</scope>
</reference>
<reference key="5">
    <citation type="journal article" date="2008" name="J. Biol. Chem.">
        <title>Murine and human autotaxin alpha, beta, and gamma isoforms: gene organization, tissue distribution, and biochemical characterization.</title>
        <authorList>
            <person name="Giganti A."/>
            <person name="Rodriguez M."/>
            <person name="Fould B."/>
            <person name="Moulharat N."/>
            <person name="Coge F."/>
            <person name="Chomarat P."/>
            <person name="Galizzi J.-P."/>
            <person name="Valet P."/>
            <person name="Saulnier-Blache J.-S."/>
            <person name="Boutin J.A."/>
            <person name="Ferry G."/>
        </authorList>
    </citation>
    <scope>NUCLEOTIDE SEQUENCE [MRNA] (ISOFORMS 1; 2 AND 3)</scope>
    <scope>PROTEIN SEQUENCE OF 36-42 AND 49-54</scope>
    <scope>CATALYTIC ACTIVITY</scope>
    <scope>ACTIVITY REGULATION</scope>
    <scope>BIOPHYSICOCHEMICAL PROPERTIES</scope>
    <scope>TISSUE SPECIFICITY</scope>
    <scope>VARIANT PRO-493</scope>
    <source>
        <tissue>Brain</tissue>
        <tissue>Melanoma</tissue>
    </source>
</reference>
<reference key="6">
    <citation type="journal article" date="2006" name="Nature">
        <title>DNA sequence and analysis of human chromosome 8.</title>
        <authorList>
            <person name="Nusbaum C."/>
            <person name="Mikkelsen T.S."/>
            <person name="Zody M.C."/>
            <person name="Asakawa S."/>
            <person name="Taudien S."/>
            <person name="Garber M."/>
            <person name="Kodira C.D."/>
            <person name="Schueler M.G."/>
            <person name="Shimizu A."/>
            <person name="Whittaker C.A."/>
            <person name="Chang J.L."/>
            <person name="Cuomo C.A."/>
            <person name="Dewar K."/>
            <person name="FitzGerald M.G."/>
            <person name="Yang X."/>
            <person name="Allen N.R."/>
            <person name="Anderson S."/>
            <person name="Asakawa T."/>
            <person name="Blechschmidt K."/>
            <person name="Bloom T."/>
            <person name="Borowsky M.L."/>
            <person name="Butler J."/>
            <person name="Cook A."/>
            <person name="Corum B."/>
            <person name="DeArellano K."/>
            <person name="DeCaprio D."/>
            <person name="Dooley K.T."/>
            <person name="Dorris L. III"/>
            <person name="Engels R."/>
            <person name="Gloeckner G."/>
            <person name="Hafez N."/>
            <person name="Hagopian D.S."/>
            <person name="Hall J.L."/>
            <person name="Ishikawa S.K."/>
            <person name="Jaffe D.B."/>
            <person name="Kamat A."/>
            <person name="Kudoh J."/>
            <person name="Lehmann R."/>
            <person name="Lokitsang T."/>
            <person name="Macdonald P."/>
            <person name="Major J.E."/>
            <person name="Matthews C.D."/>
            <person name="Mauceli E."/>
            <person name="Menzel U."/>
            <person name="Mihalev A.H."/>
            <person name="Minoshima S."/>
            <person name="Murayama Y."/>
            <person name="Naylor J.W."/>
            <person name="Nicol R."/>
            <person name="Nguyen C."/>
            <person name="O'Leary S.B."/>
            <person name="O'Neill K."/>
            <person name="Parker S.C.J."/>
            <person name="Polley A."/>
            <person name="Raymond C.K."/>
            <person name="Reichwald K."/>
            <person name="Rodriguez J."/>
            <person name="Sasaki T."/>
            <person name="Schilhabel M."/>
            <person name="Siddiqui R."/>
            <person name="Smith C.L."/>
            <person name="Sneddon T.P."/>
            <person name="Talamas J.A."/>
            <person name="Tenzin P."/>
            <person name="Topham K."/>
            <person name="Venkataraman V."/>
            <person name="Wen G."/>
            <person name="Yamazaki S."/>
            <person name="Young S.K."/>
            <person name="Zeng Q."/>
            <person name="Zimmer A.R."/>
            <person name="Rosenthal A."/>
            <person name="Birren B.W."/>
            <person name="Platzer M."/>
            <person name="Shimizu N."/>
            <person name="Lander E.S."/>
        </authorList>
    </citation>
    <scope>NUCLEOTIDE SEQUENCE [LARGE SCALE GENOMIC DNA]</scope>
</reference>
<reference key="7">
    <citation type="journal article" date="2004" name="Genome Res.">
        <title>The status, quality, and expansion of the NIH full-length cDNA project: the Mammalian Gene Collection (MGC).</title>
        <authorList>
            <consortium name="The MGC Project Team"/>
        </authorList>
    </citation>
    <scope>NUCLEOTIDE SEQUENCE [LARGE SCALE MRNA] (ISOFORM 1)</scope>
    <scope>VARIANT PRO-493</scope>
    <source>
        <tissue>Testis</tissue>
    </source>
</reference>
<reference key="8">
    <citation type="journal article" date="2002" name="J. Biol. Chem.">
        <title>Identification of human plasma lysophospholipase D, a lysophosphatidic acid-producing enzyme, as autotaxin, a multifunctional phosphodiesterase.</title>
        <authorList>
            <person name="Tokumura A."/>
            <person name="Majima E."/>
            <person name="Kariya Y."/>
            <person name="Tominaga K."/>
            <person name="Kogure K."/>
            <person name="Yasuda K."/>
            <person name="Fukuzawa K."/>
        </authorList>
    </citation>
    <scope>PROTEIN SEQUENCE OF 36-49; 318-330; 335-344; 440-450 AND 854-863</scope>
    <scope>FUNCTION</scope>
    <scope>CATALYTIC ACTIVITY</scope>
    <scope>SUBCELLULAR LOCATION</scope>
    <scope>TISSUE SPECIFICITY</scope>
    <scope>BIOPHYSICOCHEMICAL PROPERTIES</scope>
</reference>
<reference key="9">
    <citation type="journal article" date="1992" name="J. Biol. Chem.">
        <title>Identification, purification, and partial sequence analysis of autotaxin, a novel motility-stimulating protein.</title>
        <authorList>
            <person name="Stracke M.L."/>
            <person name="Krutzsch H.C."/>
            <person name="Unsworth E.J."/>
            <person name="Aarestad A."/>
            <person name="Cioce V."/>
            <person name="Schiffmann E."/>
            <person name="Liotta L.A."/>
        </authorList>
    </citation>
    <scope>PROTEIN SEQUENCE OF 256-266; 370-392; 457-463; 481-496; 501-510; 545-554; 639-643; 706-710 AND 829-840</scope>
    <scope>FUNCTION</scope>
    <scope>SUBCELLULAR LOCATION</scope>
    <scope>VARIANT PRO-493</scope>
    <source>
        <tissue>Melanoma</tissue>
    </source>
</reference>
<reference key="10">
    <citation type="journal article" date="2001" name="Cancer Res.">
        <title>Autotaxin (NPP-2), a metastasis-enhancing mitogen, is an angiogenic factor.</title>
        <authorList>
            <person name="Nam S.W."/>
            <person name="Clair T."/>
            <person name="Kim Y.S."/>
            <person name="McMarlin A."/>
            <person name="Schiffmann E."/>
            <person name="Liotta L.A."/>
            <person name="Stracke M.L."/>
        </authorList>
    </citation>
    <scope>FUNCTION IN ANGIOGENESIS</scope>
</reference>
<reference key="11">
    <citation type="journal article" date="2002" name="J. Biol. Chem.">
        <title>Serum lysophosphatidic acid is produced through diverse phospholipase pathways.</title>
        <authorList>
            <person name="Aoki J."/>
            <person name="Taira A."/>
            <person name="Takanezawa Y."/>
            <person name="Kishi Y."/>
            <person name="Hama K."/>
            <person name="Kishimoto T."/>
            <person name="Mizuno K."/>
            <person name="Saku K."/>
            <person name="Taguchi R."/>
            <person name="Arai H."/>
        </authorList>
    </citation>
    <scope>FUNCTION</scope>
</reference>
<reference key="12">
    <citation type="journal article" date="2003" name="Cancer Res.">
        <title>Autotaxin hydrolyzes sphingosylphosphorylcholine to produce the regulator of migration, sphingosine-1-phosphate.</title>
        <authorList>
            <person name="Clair T."/>
            <person name="Aoki J."/>
            <person name="Koh E."/>
            <person name="Bandle R.W."/>
            <person name="Nam S.W."/>
            <person name="Ptaszynska M.M."/>
            <person name="Mills G.B."/>
            <person name="Schiffmann E."/>
            <person name="Liotta L.A."/>
            <person name="Stracke M.L."/>
        </authorList>
    </citation>
    <scope>FUNCTION</scope>
    <scope>CATALYTIC ACTIVITY</scope>
    <scope>BIOPHYSICOCHEMICAL PROPERTIES</scope>
    <scope>MUTAGENESIS OF THR-210; HIS-316 AND HIS-360</scope>
</reference>
<reference key="13">
    <citation type="journal article" date="2005" name="Diabetologia">
        <title>Potential involvement of adipocyte insulin resistance in obesity-associated up-regulation of adipocyte lysophospholipase D/autotaxin expression.</title>
        <authorList>
            <person name="Boucher J."/>
            <person name="Quilliot D."/>
            <person name="Pradere J.P."/>
            <person name="Simon M.F."/>
            <person name="Gres S."/>
            <person name="Guigne C."/>
            <person name="Prevot D."/>
            <person name="Ferry G."/>
            <person name="Boutin J.A."/>
            <person name="Carpene C."/>
            <person name="Valet P."/>
            <person name="Saulnier-Blache J.S."/>
        </authorList>
    </citation>
    <scope>INDUCTION</scope>
    <scope>POSSIBLE FUNCTION IN OBESITY</scope>
</reference>
<reference key="14">
    <citation type="journal article" date="2011" name="J. Lipid Res.">
        <title>The phospholipase A1 activity of lysophospholipase A-I links platelet activation to LPA production during blood coagulation.</title>
        <authorList>
            <person name="Bolen A.L."/>
            <person name="Naren A.P."/>
            <person name="Yarlagadda S."/>
            <person name="Beranova-Giorgianni S."/>
            <person name="Chen L."/>
            <person name="Norman D."/>
            <person name="Baker D.L."/>
            <person name="Rowland M.M."/>
            <person name="Best M.D."/>
            <person name="Sano T."/>
            <person name="Tsukahara T."/>
            <person name="Liliom K."/>
            <person name="Igarashi Y."/>
            <person name="Tigyi G."/>
        </authorList>
    </citation>
    <scope>FUNCTION</scope>
    <scope>CATALYTIC ACTIVITY</scope>
    <scope>BIOPHYSICOCHEMICAL PROPERTIES</scope>
</reference>
<reference key="15">
    <citation type="journal article" date="2011" name="Nat. Struct. Mol. Biol.">
        <title>Structural basis of substrate discrimination and integrin binding by autotaxin.</title>
        <authorList>
            <person name="Hausmann J."/>
            <person name="Kamtekar S."/>
            <person name="Christodoulou E."/>
            <person name="Day J.E."/>
            <person name="Wu T."/>
            <person name="Fulkerson Z."/>
            <person name="Albers H.M."/>
            <person name="van Meeteren L.A."/>
            <person name="Houben A.J."/>
            <person name="van Zeijl L."/>
            <person name="Jansen S."/>
            <person name="Andries M."/>
            <person name="Hall T."/>
            <person name="Pegg L.E."/>
            <person name="Benson T.E."/>
            <person name="Kasiem M."/>
            <person name="Harlos K."/>
            <person name="Kooi C.W."/>
            <person name="Smyth S.S."/>
            <person name="Ovaa H."/>
            <person name="Bollen M."/>
            <person name="Morris A.J."/>
            <person name="Moolenaar W.H."/>
            <person name="Perrakis A."/>
        </authorList>
    </citation>
    <scope>FUNCTION</scope>
    <scope>CATALYTIC ACTIVITY</scope>
    <scope>ACTIVITY REGULATION</scope>
    <scope>MUTAGENESIS OF THR-210; PHE-211; ALA-218; ASN-231 AND TYR-307</scope>
</reference>
<reference evidence="36 37 38 39" key="16">
    <citation type="journal article" date="2015" name="Mol. Pharmacol.">
        <title>Structural Basis for Inhibition of Human Autotaxin by Four Potent Compounds with Distinct Modes of Binding.</title>
        <authorList>
            <person name="Stein A.J."/>
            <person name="Bain G."/>
            <person name="Prodanovich P."/>
            <person name="Santini A.M."/>
            <person name="Darlington J."/>
            <person name="Stelzer N.M."/>
            <person name="Sidhu R.S."/>
            <person name="Schaub J."/>
            <person name="Goulet L."/>
            <person name="Lonergan D."/>
            <person name="Calderon I."/>
            <person name="Evans J.F."/>
            <person name="Hutchinson J.H."/>
        </authorList>
    </citation>
    <scope>X-RAY CRYSTALLOGRAPHY (1.75 ANGSTROMS) OF 55-860 IN COMPLEX WITH SYNTHETIC INHIBITOR; CALCIUM AND ZINC</scope>
    <scope>FUNCTION</scope>
    <scope>CATALYTIC ACTIVITY</scope>
    <scope>COFACTOR</scope>
    <scope>SUBCELLULAR LOCATION</scope>
    <scope>TISSUE SPECIFICITY</scope>
    <scope>GLYCOSYLATION AT ASN-525</scope>
    <scope>DISULFIDE BONDS</scope>
</reference>
<reference evidence="42" key="17">
    <citation type="journal article" date="2017" name="J. Med. Chem.">
        <title>Discovery of 2-[[2-Ethyl-6-[4-[2-(3-hydroxyazetidin-1-yl)-2-oxoethyl]piperazin-1-yl]-8-methylimidazo[1,2-a]pyridin-3-yl]methylamino]-4-(4-fluorophenyl)thiazole-5-carbonitrile (GLPG1690), a First-in-Class Autotaxin Inhibitor Undergoing Clinical Evaluation for the Treatment of Idiopathic Pulmonary Fibrosis.</title>
        <authorList>
            <person name="Desroy N."/>
            <person name="Housseman C."/>
            <person name="Bock X."/>
            <person name="Joncour A."/>
            <person name="Bienvenu N."/>
            <person name="Cherel L."/>
            <person name="Labeguere V."/>
            <person name="Rondet E."/>
            <person name="Peixoto C."/>
            <person name="Grassot J.M."/>
            <person name="Picolet O."/>
            <person name="Annoot D."/>
            <person name="Triballeau N."/>
            <person name="Monjardet A."/>
            <person name="Wakselman E."/>
            <person name="Roncoroni V."/>
            <person name="Le Tallec S."/>
            <person name="Blanque R."/>
            <person name="Cottereaux C."/>
            <person name="Vandervoort N."/>
            <person name="Christophe T."/>
            <person name="Mollat P."/>
            <person name="Lamers M."/>
            <person name="Auberval M."/>
            <person name="Hrvacic B."/>
            <person name="Ralic J."/>
            <person name="Oste L."/>
            <person name="van der Aar E."/>
            <person name="Brys R."/>
            <person name="Heckmann B."/>
        </authorList>
    </citation>
    <scope>X-RAY CRYSTALLOGRAPHY (2.43 ANGSTROMS) IN COMPLEX WITH SYNTHETIC INHIBITOR; CALCIUM AND ZINC</scope>
    <scope>COFACTOR</scope>
    <scope>DISULFIDE BONDS</scope>
</reference>
<reference evidence="40" key="18">
    <citation type="journal article" date="2017" name="J. Pharmacol. Exp. Ther.">
        <title>Selective Inhibition of Autotaxin Is Efficacious in Mouse Models of Liver Fibrosis.</title>
        <authorList>
            <person name="Bain G."/>
            <person name="Shannon K.E."/>
            <person name="Huang F."/>
            <person name="Darlington J."/>
            <person name="Goulet L."/>
            <person name="Prodanovich P."/>
            <person name="Ma G.L."/>
            <person name="Santini A.M."/>
            <person name="Stein A.J."/>
            <person name="Lonergan D."/>
            <person name="King C.D."/>
            <person name="Calderon I."/>
            <person name="Lai A."/>
            <person name="Hutchinson J.H."/>
            <person name="Evans J.F."/>
        </authorList>
    </citation>
    <scope>X-RAY CRYSTALLOGRAPHY (2.59 ANGSTROMS) IN COMPLEX WITH SYNTHETIC INHIBITOR; CALCIUM AND ZINC</scope>
    <scope>CATALYTIC ACTIVITY</scope>
    <scope>FUNCTION</scope>
    <scope>COFACTOR</scope>
    <scope>SUBCELLULAR LOCATION</scope>
    <scope>DISULFIDE BONDS</scope>
</reference>
<name>ENPP2_HUMAN</name>
<sequence length="863" mass="98994">MARRSSFQSCQIISLFTFAVGVNICLGFTAHRIKRAEGWEEGPPTVLSDSPWTNISGSCKGRCFELQEAGPPDCRCDNLCKSYTSCCHDFDELCLKTARGWECTKDRCGEVRNEENACHCSEDCLARGDCCTNYQVVCKGESHWVDDDCEEIKAAECPAGFVRPPLIIFSVDGFRASYMKKGSKVMPNIEKLRSCGTHSPYMRPVYPTKTFPNLYTLATGLYPESHGIVGNSMYDPVFDATFHLRGREKFNHRWWGGQPLWITATKQGVKAGTFFWSVVIPHERRILTILQWLTLPDHERPSVYAFYSEQPDFSGHKYGPFGPEMTNPLREIDKIVGQLMDGLKQLKLHRCVNVIFVGDHGMEDVTCDRTEFLSNYLTNVDDITLVPGTLGRIRSKFSNNAKYDPKAIIANLTCKKPDQHFKPYLKQHLPKRLHYANNRRIEDIHLLVERRWHVARKPLDVYKKPSGKCFFQGDHGFDNKVNSMQTVFVGYGSTFKYKTKVPPFENIELYNVMCDLLGLKPAPNNGTHGSLNHLLRTNTFRPTMPEEVTRPNYPGIMYLQSDFDLGCTCDDKVEPKNKLDELNKRLHTKGSTEERHLLYGRPAVLYRTRYDILYHTDFESGYSEIFLMPLWTSYTVSKQAEVSSVPDHLTSCVRPDVRVSPSFSQNCLAYKNDKQMSYGFLFPPYLSSSPEAKYDAFLVTNMVPMYPAFKRVWNYFQRVLVKKYASERNGVNVISGPIFDYDYDGLHDTEDKIKQYVEGSSIPVPTHYYSIITSCLDFTQPADKCDGPLSVSSFILPHRPDNEESCNSSEDESKWVEELMKMHTARVRDIEHLTSLDFFRKTSRSYPEILTLKTYLHTYESEI</sequence>
<protein>
    <recommendedName>
        <fullName evidence="22 25">Autotaxin</fullName>
        <ecNumber evidence="6 11 13 14 16">3.1.4.39</ecNumber>
        <ecNumber evidence="6 14">3.1.4.4</ecNumber>
    </recommendedName>
    <alternativeName>
        <fullName evidence="35">Ectonucleotide pyrophosphatase/phosphodiesterase family member 2</fullName>
        <shortName>E-NPP 2</shortName>
    </alternativeName>
    <alternativeName>
        <fullName>Extracellular lysophospholipase D</fullName>
        <shortName evidence="22">LysoPLD</shortName>
    </alternativeName>
</protein>
<feature type="signal peptide" evidence="1">
    <location>
        <begin position="1"/>
        <end position="27"/>
    </location>
</feature>
<feature type="propeptide" id="PRO_0000281649" description="Removed by furin" evidence="6 13">
    <location>
        <begin position="28"/>
        <end position="35"/>
    </location>
</feature>
<feature type="chain" id="PRO_0000188567" description="Autotaxin">
    <location>
        <begin position="36"/>
        <end position="863"/>
    </location>
</feature>
<feature type="domain" description="SMB 1" evidence="4">
    <location>
        <begin position="55"/>
        <end position="98"/>
    </location>
</feature>
<feature type="domain" description="SMB 2" evidence="4">
    <location>
        <begin position="99"/>
        <end position="143"/>
    </location>
</feature>
<feature type="region of interest" description="Phosphodiesterase" evidence="2">
    <location>
        <begin position="145"/>
        <end position="502"/>
    </location>
</feature>
<feature type="region of interest" description="Nuclease-like domain" evidence="2">
    <location>
        <begin position="598"/>
        <end position="863"/>
    </location>
</feature>
<feature type="region of interest" description="Required for secretion" evidence="2">
    <location>
        <begin position="830"/>
        <end position="851"/>
    </location>
</feature>
<feature type="short sequence motif" description="Cell attachment site" evidence="3">
    <location>
        <begin position="127"/>
        <end position="129"/>
    </location>
</feature>
<feature type="active site" description="Nucleophile" evidence="2">
    <location>
        <position position="210"/>
    </location>
</feature>
<feature type="binding site" evidence="16 17 36 37 38 40">
    <location>
        <position position="172"/>
    </location>
    <ligand>
        <name>Zn(2+)</name>
        <dbReference type="ChEBI" id="CHEBI:29105"/>
        <label>1</label>
        <note>catalytic</note>
    </ligand>
</feature>
<feature type="binding site" evidence="2">
    <location>
        <position position="210"/>
    </location>
    <ligand>
        <name>1-(9Z-octadecenoyl)-sn-glycero-3-phosphate</name>
        <dbReference type="ChEBI" id="CHEBI:74544"/>
    </ligand>
</feature>
<feature type="binding site" evidence="2">
    <location>
        <position position="210"/>
    </location>
    <ligand>
        <name>1-hexadecanoyl-sn-glycero-3-phosphate</name>
        <dbReference type="ChEBI" id="CHEBI:57518"/>
    </ligand>
</feature>
<feature type="binding site" evidence="2">
    <location>
        <position position="210"/>
    </location>
    <ligand>
        <name>1-tetradecanoyl-sn-glycerol 3-phosphate</name>
        <dbReference type="ChEBI" id="CHEBI:72683"/>
    </ligand>
</feature>
<feature type="binding site" evidence="16 17 36 37 38 40">
    <location>
        <position position="210"/>
    </location>
    <ligand>
        <name>Zn(2+)</name>
        <dbReference type="ChEBI" id="CHEBI:29105"/>
        <label>1</label>
        <note>catalytic</note>
    </ligand>
</feature>
<feature type="binding site" evidence="2">
    <location>
        <position position="231"/>
    </location>
    <ligand>
        <name>1-(9Z-octadecenoyl)-sn-glycero-3-phosphate</name>
        <dbReference type="ChEBI" id="CHEBI:74544"/>
    </ligand>
</feature>
<feature type="binding site" evidence="2">
    <location>
        <position position="231"/>
    </location>
    <ligand>
        <name>1-hexadecanoyl-sn-glycero-3-phosphate</name>
        <dbReference type="ChEBI" id="CHEBI:57518"/>
    </ligand>
</feature>
<feature type="binding site" evidence="2">
    <location>
        <position position="231"/>
    </location>
    <ligand>
        <name>1-tetradecanoyl-sn-glycerol 3-phosphate</name>
        <dbReference type="ChEBI" id="CHEBI:72683"/>
    </ligand>
</feature>
<feature type="binding site" evidence="2">
    <location>
        <position position="312"/>
    </location>
    <ligand>
        <name>1-(9Z-octadecenoyl)-sn-glycero-3-phosphate</name>
        <dbReference type="ChEBI" id="CHEBI:74544"/>
    </ligand>
</feature>
<feature type="binding site" evidence="2">
    <location>
        <position position="312"/>
    </location>
    <ligand>
        <name>1-hexadecanoyl-sn-glycero-3-phosphate</name>
        <dbReference type="ChEBI" id="CHEBI:57518"/>
    </ligand>
</feature>
<feature type="binding site" evidence="2">
    <location>
        <position position="312"/>
    </location>
    <ligand>
        <name>1-tetradecanoyl-sn-glycerol 3-phosphate</name>
        <dbReference type="ChEBI" id="CHEBI:72683"/>
    </ligand>
</feature>
<feature type="binding site" evidence="16 36 37 38 39">
    <location>
        <position position="312"/>
    </location>
    <ligand>
        <name>Zn(2+)</name>
        <dbReference type="ChEBI" id="CHEBI:29105"/>
        <label>2</label>
        <note>catalytic</note>
    </ligand>
</feature>
<feature type="binding site" evidence="16 36 37 38 39">
    <location>
        <position position="316"/>
    </location>
    <ligand>
        <name>Zn(2+)</name>
        <dbReference type="ChEBI" id="CHEBI:29105"/>
        <label>2</label>
        <note>catalytic</note>
    </ligand>
</feature>
<feature type="binding site" evidence="16 17 36 37 38 40">
    <location>
        <position position="359"/>
    </location>
    <ligand>
        <name>Zn(2+)</name>
        <dbReference type="ChEBI" id="CHEBI:29105"/>
        <label>1</label>
        <note>catalytic</note>
    </ligand>
</feature>
<feature type="binding site" evidence="16 17 36 37 38 40">
    <location>
        <position position="360"/>
    </location>
    <ligand>
        <name>Zn(2+)</name>
        <dbReference type="ChEBI" id="CHEBI:29105"/>
        <label>1</label>
        <note>catalytic</note>
    </ligand>
</feature>
<feature type="binding site" evidence="2">
    <location>
        <position position="475"/>
    </location>
    <ligand>
        <name>1-(9Z-octadecenoyl)-sn-glycero-3-phosphate</name>
        <dbReference type="ChEBI" id="CHEBI:74544"/>
    </ligand>
</feature>
<feature type="binding site" evidence="2">
    <location>
        <position position="475"/>
    </location>
    <ligand>
        <name>1-hexadecanoyl-sn-glycero-3-phosphate</name>
        <dbReference type="ChEBI" id="CHEBI:57518"/>
    </ligand>
</feature>
<feature type="binding site" evidence="2">
    <location>
        <position position="475"/>
    </location>
    <ligand>
        <name>1-tetradecanoyl-sn-glycerol 3-phosphate</name>
        <dbReference type="ChEBI" id="CHEBI:72683"/>
    </ligand>
</feature>
<feature type="binding site" evidence="16 36 37 38 39">
    <location>
        <position position="475"/>
    </location>
    <ligand>
        <name>Zn(2+)</name>
        <dbReference type="ChEBI" id="CHEBI:29105"/>
        <label>2</label>
        <note>catalytic</note>
    </ligand>
</feature>
<feature type="binding site" evidence="16 17 36 37 38 39 40">
    <location>
        <position position="740"/>
    </location>
    <ligand>
        <name>Ca(2+)</name>
        <dbReference type="ChEBI" id="CHEBI:29108"/>
    </ligand>
</feature>
<feature type="binding site" evidence="16 17 36 37 38 39 40">
    <location>
        <position position="742"/>
    </location>
    <ligand>
        <name>Ca(2+)</name>
        <dbReference type="ChEBI" id="CHEBI:29108"/>
    </ligand>
</feature>
<feature type="binding site" evidence="16 36 37 38 39">
    <location>
        <position position="744"/>
    </location>
    <ligand>
        <name>Ca(2+)</name>
        <dbReference type="ChEBI" id="CHEBI:29108"/>
    </ligand>
</feature>
<feature type="binding site" evidence="16 17 36 37 38 39 40">
    <location>
        <position position="746"/>
    </location>
    <ligand>
        <name>Ca(2+)</name>
        <dbReference type="ChEBI" id="CHEBI:29108"/>
    </ligand>
</feature>
<feature type="binding site" evidence="16 17 36 37 38 39 40">
    <location>
        <position position="748"/>
    </location>
    <ligand>
        <name>Ca(2+)</name>
        <dbReference type="ChEBI" id="CHEBI:29108"/>
    </ligand>
</feature>
<feature type="site" description="Essential for catalytic activity" evidence="2">
    <location>
        <position position="853"/>
    </location>
</feature>
<feature type="glycosylation site" description="N-linked (GlcNAc...) asparagine" evidence="3">
    <location>
        <position position="54"/>
    </location>
</feature>
<feature type="glycosylation site" description="N-linked (GlcNAc...) asparagine" evidence="3">
    <location>
        <position position="411"/>
    </location>
</feature>
<feature type="glycosylation site" description="N-linked (GlcNAc...) asparagine" evidence="16 36 37 38 39">
    <location>
        <position position="525"/>
    </location>
</feature>
<feature type="glycosylation site" description="N-linked (GlcNAc...) asparagine" evidence="3">
    <location>
        <position position="807"/>
    </location>
</feature>
<feature type="disulfide bond" evidence="4 16 36 37 38 39 40 41 42">
    <location>
        <begin position="59"/>
        <end position="76"/>
    </location>
</feature>
<feature type="disulfide bond" evidence="4 16 36 37 38 39 40 41 42">
    <location>
        <begin position="63"/>
        <end position="94"/>
    </location>
</feature>
<feature type="disulfide bond" evidence="4 16 36 37 38 39 40 41 42">
    <location>
        <begin position="74"/>
        <end position="87"/>
    </location>
</feature>
<feature type="disulfide bond" evidence="4 16 36 37 38 39 40 41 42">
    <location>
        <begin position="80"/>
        <end position="86"/>
    </location>
</feature>
<feature type="disulfide bond" evidence="4 16 36 37 38 39 40 41 42">
    <location>
        <begin position="103"/>
        <end position="120"/>
    </location>
</feature>
<feature type="disulfide bond" evidence="4 16 36 37 38 39 40 41 42">
    <location>
        <begin position="108"/>
        <end position="138"/>
    </location>
</feature>
<feature type="disulfide bond" evidence="4 16 36 37 38 39 40 41 42">
    <location>
        <begin position="118"/>
        <end position="131"/>
    </location>
</feature>
<feature type="disulfide bond" evidence="4 16 36 37 38 39 40 41 42">
    <location>
        <begin position="124"/>
        <end position="130"/>
    </location>
</feature>
<feature type="disulfide bond" evidence="4 16 36 37 38 39 40 41 42">
    <location>
        <begin position="149"/>
        <end position="195"/>
    </location>
</feature>
<feature type="disulfide bond" evidence="4 16 36 37 38 39 40 41 42">
    <location>
        <begin position="157"/>
        <end position="351"/>
    </location>
</feature>
<feature type="disulfide bond" evidence="4 16 37 38 41">
    <location>
        <begin position="367"/>
        <end position="469"/>
    </location>
</feature>
<feature type="disulfide bond" evidence="4 16 36 37 38 39 40 41 42">
    <location>
        <begin position="414"/>
        <end position="806"/>
    </location>
</feature>
<feature type="disulfide bond" evidence="4 16 36 37 38 41 42">
    <location>
        <begin position="567"/>
        <end position="667"/>
    </location>
</feature>
<feature type="disulfide bond" evidence="4 16 37 41 42">
    <location>
        <begin position="569"/>
        <end position="652"/>
    </location>
</feature>
<feature type="disulfide bond" evidence="4 16 36 37 38 39 40 41 42">
    <location>
        <begin position="775"/>
        <end position="785"/>
    </location>
</feature>
<feature type="splice variant" id="VSP_006750" description="In isoform 2." evidence="23 25">
    <original>E</original>
    <variation>EESSYGSPFTPAKRPKRKVAPKRRQERPVAPPKKRRRKIHRMDHYAAETRQDK</variation>
    <location>
        <position position="324"/>
    </location>
</feature>
<feature type="splice variant" id="VSP_036398" description="In isoform 3." evidence="23">
    <original>E</original>
    <variation>EAETRKFRGSRNENKENINGNFEPRK</variation>
    <location>
        <position position="593"/>
    </location>
</feature>
<feature type="sequence variant" id="VAR_060469" description="In dbSNP:rs10283100." evidence="9 11 12 13 19 20 21">
    <original>S</original>
    <variation>P</variation>
    <location>
        <position position="493"/>
    </location>
</feature>
<feature type="sequence variant" id="VAR_057472" description="In dbSNP:rs2289886.">
    <original>N</original>
    <variation>S</variation>
    <location>
        <position position="577"/>
    </location>
</feature>
<feature type="sequence variant" id="VAR_057473" description="In dbSNP:rs16892767.">
    <original>S</original>
    <variation>L</variation>
    <location>
        <position position="726"/>
    </location>
</feature>
<feature type="mutagenesis site" description="Reduces lysophospholipase activity by about 70%.">
    <original>S</original>
    <variation>E</variation>
    <location>
        <position position="170"/>
    </location>
</feature>
<feature type="mutagenesis site" description="Loss of lysophospholipase activity and ability to hydrolyze sphingosylphosphorylcholine." evidence="8 14">
    <original>T</original>
    <variation>A</variation>
    <location>
        <position position="210"/>
    </location>
</feature>
<feature type="mutagenesis site" description="Reduces lysophospholipase activity by about 70%." evidence="14">
    <original>F</original>
    <variation>Y</variation>
    <location>
        <position position="211"/>
    </location>
</feature>
<feature type="mutagenesis site" description="Reduces lysophospholipase activity by about 50%." evidence="14">
    <original>A</original>
    <variation>V</variation>
    <location>
        <position position="218"/>
    </location>
</feature>
<feature type="mutagenesis site" description="Strongly reduced lysophospholipase activity." evidence="14">
    <original>N</original>
    <variation>A</variation>
    <location>
        <position position="231"/>
    </location>
</feature>
<feature type="mutagenesis site" description="Reduces lysophospholipase activity by about 70%." evidence="14">
    <original>Y</original>
    <variation>Q</variation>
    <location>
        <position position="307"/>
    </location>
</feature>
<feature type="mutagenesis site" description="Loss of ability to hydrolyze sphingosylphosphorylcholine." evidence="8">
    <original>H</original>
    <variation>Q</variation>
    <location>
        <position position="316"/>
    </location>
</feature>
<feature type="mutagenesis site" description="Loss of ability to hydrolyze sphingosylphosphorylcholine." evidence="8">
    <original>H</original>
    <variation>Q</variation>
    <location>
        <position position="360"/>
    </location>
</feature>
<feature type="sequence conflict" description="In Ref. 1; AAA64785 and 5; ABW38316." evidence="27" ref="1 5">
    <original>N</original>
    <variation>S</variation>
    <location>
        <position position="23"/>
    </location>
</feature>
<feature type="sequence conflict" description="In Ref. 2; BAA08260." evidence="27" ref="2">
    <original>D</original>
    <variation>H</variation>
    <location>
        <position position="73"/>
    </location>
</feature>
<feature type="sequence conflict" description="In Ref. 3; AAB00855." evidence="27" ref="3">
    <original>G</original>
    <variation>A</variation>
    <location>
        <position position="100"/>
    </location>
</feature>
<feature type="sequence conflict" description="In Ref. 1; AAA64785 and 5; ABW38316." evidence="27" ref="1 5">
    <original>Q</original>
    <variation>R</variation>
    <location>
        <position position="291"/>
    </location>
</feature>
<feature type="sequence conflict" description="In Ref. 1; AAA64785 and 5; ABW38316." evidence="27" ref="1 5">
    <original>H</original>
    <variation>R</variation>
    <location>
        <position position="349"/>
    </location>
</feature>
<feature type="sequence conflict" description="In Ref. 9; AA sequence." evidence="27" ref="9">
    <original>K</original>
    <variation>P</variation>
    <location>
        <position position="457"/>
    </location>
</feature>
<feature type="sequence conflict" description="In Ref. 9; AA sequence." evidence="27" ref="9">
    <original>V</original>
    <variation>S</variation>
    <location>
        <position position="501"/>
    </location>
</feature>
<feature type="sequence conflict" description="In Ref. 9; AA sequence." evidence="27" ref="9">
    <original>E</original>
    <variation>N</variation>
    <location>
        <position position="508"/>
    </location>
</feature>
<feature type="sequence conflict" description="In Ref. 9; AA sequence." evidence="27" ref="9">
    <original>P</original>
    <variation>L</variation>
    <location>
        <position position="554"/>
    </location>
</feature>
<feature type="sequence conflict" description="In Ref. 1; AAA64785 and 5; ABW38316." evidence="27" ref="1 5">
    <original>P</original>
    <variation>L</variation>
    <location>
        <position position="629"/>
    </location>
</feature>
<feature type="sequence conflict" description="In Ref. 2; BAA08260." evidence="27" ref="2">
    <original>S</original>
    <variation>R</variation>
    <location>
        <position position="644"/>
    </location>
</feature>
<feature type="sequence conflict" description="In Ref. 2; BAA08260." evidence="27" ref="2">
    <original>V</original>
    <variation>A</variation>
    <location>
        <position position="703"/>
    </location>
</feature>
<feature type="sequence conflict" description="In Ref. 2; BAA08260." evidence="27" ref="2">
    <original>Y</original>
    <variation>H</variation>
    <location>
        <position position="769"/>
    </location>
</feature>
<feature type="turn" evidence="44">
    <location>
        <begin position="60"/>
        <end position="64"/>
    </location>
</feature>
<feature type="strand" evidence="49">
    <location>
        <begin position="70"/>
        <end position="73"/>
    </location>
</feature>
<feature type="helix" evidence="44">
    <location>
        <begin position="80"/>
        <end position="83"/>
    </location>
</feature>
<feature type="helix" evidence="44">
    <location>
        <begin position="90"/>
        <end position="94"/>
    </location>
</feature>
<feature type="turn" evidence="44">
    <location>
        <begin position="99"/>
        <end position="101"/>
    </location>
</feature>
<feature type="helix" evidence="44">
    <location>
        <begin position="105"/>
        <end position="107"/>
    </location>
</feature>
<feature type="strand" evidence="44">
    <location>
        <begin position="116"/>
        <end position="119"/>
    </location>
</feature>
<feature type="strand" evidence="45">
    <location>
        <begin position="121"/>
        <end position="123"/>
    </location>
</feature>
<feature type="helix" evidence="44">
    <location>
        <begin position="124"/>
        <end position="127"/>
    </location>
</feature>
<feature type="helix" evidence="44">
    <location>
        <begin position="134"/>
        <end position="138"/>
    </location>
</feature>
<feature type="helix" evidence="44">
    <location>
        <begin position="144"/>
        <end position="146"/>
    </location>
</feature>
<feature type="strand" evidence="44">
    <location>
        <begin position="166"/>
        <end position="172"/>
    </location>
</feature>
<feature type="helix" evidence="44">
    <location>
        <begin position="176"/>
        <end position="181"/>
    </location>
</feature>
<feature type="helix" evidence="44">
    <location>
        <begin position="182"/>
        <end position="185"/>
    </location>
</feature>
<feature type="helix" evidence="44">
    <location>
        <begin position="187"/>
        <end position="195"/>
    </location>
</feature>
<feature type="strand" evidence="44">
    <location>
        <begin position="196"/>
        <end position="198"/>
    </location>
</feature>
<feature type="helix" evidence="44">
    <location>
        <begin position="210"/>
        <end position="219"/>
    </location>
</feature>
<feature type="helix" evidence="44">
    <location>
        <begin position="223"/>
        <end position="226"/>
    </location>
</feature>
<feature type="strand" evidence="44">
    <location>
        <begin position="230"/>
        <end position="235"/>
    </location>
</feature>
<feature type="turn" evidence="44">
    <location>
        <begin position="236"/>
        <end position="239"/>
    </location>
</feature>
<feature type="strand" evidence="44">
    <location>
        <begin position="240"/>
        <end position="242"/>
    </location>
</feature>
<feature type="strand" evidence="44">
    <location>
        <begin position="244"/>
        <end position="247"/>
    </location>
</feature>
<feature type="helix" evidence="44">
    <location>
        <begin position="248"/>
        <end position="250"/>
    </location>
</feature>
<feature type="helix" evidence="44">
    <location>
        <begin position="252"/>
        <end position="254"/>
    </location>
</feature>
<feature type="strand" evidence="45">
    <location>
        <begin position="255"/>
        <end position="257"/>
    </location>
</feature>
<feature type="helix" evidence="44">
    <location>
        <begin position="260"/>
        <end position="266"/>
    </location>
</feature>
<feature type="strand" evidence="46">
    <location>
        <begin position="278"/>
        <end position="280"/>
    </location>
</feature>
<feature type="helix" evidence="44">
    <location>
        <begin position="282"/>
        <end position="292"/>
    </location>
</feature>
<feature type="turn" evidence="44">
    <location>
        <begin position="297"/>
        <end position="299"/>
    </location>
</feature>
<feature type="strand" evidence="44">
    <location>
        <begin position="302"/>
        <end position="311"/>
    </location>
</feature>
<feature type="helix" evidence="44">
    <location>
        <begin position="312"/>
        <end position="318"/>
    </location>
</feature>
<feature type="helix" evidence="44">
    <location>
        <begin position="323"/>
        <end position="325"/>
    </location>
</feature>
<feature type="helix" evidence="44">
    <location>
        <begin position="326"/>
        <end position="345"/>
    </location>
</feature>
<feature type="turn" evidence="44">
    <location>
        <begin position="349"/>
        <end position="351"/>
    </location>
</feature>
<feature type="strand" evidence="44">
    <location>
        <begin position="353"/>
        <end position="359"/>
    </location>
</feature>
<feature type="strand" evidence="44">
    <location>
        <begin position="369"/>
        <end position="372"/>
    </location>
</feature>
<feature type="helix" evidence="44">
    <location>
        <begin position="373"/>
        <end position="375"/>
    </location>
</feature>
<feature type="helix" evidence="43">
    <location>
        <begin position="380"/>
        <end position="382"/>
    </location>
</feature>
<feature type="strand" evidence="44">
    <location>
        <begin position="383"/>
        <end position="386"/>
    </location>
</feature>
<feature type="strand" evidence="44">
    <location>
        <begin position="388"/>
        <end position="399"/>
    </location>
</feature>
<feature type="helix" evidence="44">
    <location>
        <begin position="405"/>
        <end position="412"/>
    </location>
</feature>
<feature type="strand" evidence="47">
    <location>
        <begin position="413"/>
        <end position="416"/>
    </location>
</feature>
<feature type="strand" evidence="44">
    <location>
        <begin position="420"/>
        <end position="425"/>
    </location>
</feature>
<feature type="helix" evidence="44">
    <location>
        <begin position="426"/>
        <end position="428"/>
    </location>
</feature>
<feature type="helix" evidence="44">
    <location>
        <begin position="431"/>
        <end position="433"/>
    </location>
</feature>
<feature type="strand" evidence="44">
    <location>
        <begin position="443"/>
        <end position="448"/>
    </location>
</feature>
<feature type="strand" evidence="44">
    <location>
        <begin position="453"/>
        <end position="457"/>
    </location>
</feature>
<feature type="helix" evidence="48">
    <location>
        <begin position="458"/>
        <end position="460"/>
    </location>
</feature>
<feature type="strand" evidence="44">
    <location>
        <begin position="472"/>
        <end position="474"/>
    </location>
</feature>
<feature type="helix" evidence="44">
    <location>
        <begin position="482"/>
        <end position="484"/>
    </location>
</feature>
<feature type="strand" evidence="44">
    <location>
        <begin position="488"/>
        <end position="492"/>
    </location>
</feature>
<feature type="strand" evidence="44">
    <location>
        <begin position="497"/>
        <end position="500"/>
    </location>
</feature>
<feature type="helix" evidence="44">
    <location>
        <begin position="506"/>
        <end position="508"/>
    </location>
</feature>
<feature type="helix" evidence="44">
    <location>
        <begin position="509"/>
        <end position="516"/>
    </location>
</feature>
<feature type="turn" evidence="44">
    <location>
        <begin position="528"/>
        <end position="531"/>
    </location>
</feature>
<feature type="helix" evidence="44">
    <location>
        <begin position="532"/>
        <end position="534"/>
    </location>
</feature>
<feature type="strand" evidence="44">
    <location>
        <begin position="535"/>
        <end position="537"/>
    </location>
</feature>
<feature type="helix" evidence="44">
    <location>
        <begin position="560"/>
        <end position="562"/>
    </location>
</feature>
<feature type="helix" evidence="48">
    <location>
        <begin position="576"/>
        <end position="585"/>
    </location>
</feature>
<feature type="helix" evidence="43">
    <location>
        <begin position="593"/>
        <end position="596"/>
    </location>
</feature>
<feature type="strand" evidence="44">
    <location>
        <begin position="610"/>
        <end position="614"/>
    </location>
</feature>
<feature type="strand" evidence="44">
    <location>
        <begin position="619"/>
        <end position="623"/>
    </location>
</feature>
<feature type="turn" evidence="44">
    <location>
        <begin position="624"/>
        <end position="627"/>
    </location>
</feature>
<feature type="strand" evidence="44">
    <location>
        <begin position="628"/>
        <end position="636"/>
    </location>
</feature>
<feature type="helix" evidence="44">
    <location>
        <begin position="647"/>
        <end position="649"/>
    </location>
</feature>
<feature type="helix" evidence="44">
    <location>
        <begin position="661"/>
        <end position="663"/>
    </location>
</feature>
<feature type="helix" evidence="44">
    <location>
        <begin position="667"/>
        <end position="672"/>
    </location>
</feature>
<feature type="strand" evidence="44">
    <location>
        <begin position="677"/>
        <end position="682"/>
    </location>
</feature>
<feature type="helix" evidence="44">
    <location>
        <begin position="684"/>
        <end position="686"/>
    </location>
</feature>
<feature type="turn" evidence="44">
    <location>
        <begin position="690"/>
        <end position="692"/>
    </location>
</feature>
<feature type="helix" evidence="44">
    <location>
        <begin position="693"/>
        <end position="696"/>
    </location>
</feature>
<feature type="helix" evidence="44">
    <location>
        <begin position="699"/>
        <end position="701"/>
    </location>
</feature>
<feature type="strand" evidence="44">
    <location>
        <begin position="702"/>
        <end position="705"/>
    </location>
</feature>
<feature type="helix" evidence="44">
    <location>
        <begin position="707"/>
        <end position="718"/>
    </location>
</feature>
<feature type="helix" evidence="44">
    <location>
        <begin position="720"/>
        <end position="728"/>
    </location>
</feature>
<feature type="strand" evidence="44">
    <location>
        <begin position="730"/>
        <end position="738"/>
    </location>
</feature>
<feature type="strand" evidence="44">
    <location>
        <begin position="744"/>
        <end position="746"/>
    </location>
</feature>
<feature type="helix" evidence="44">
    <location>
        <begin position="750"/>
        <end position="752"/>
    </location>
</feature>
<feature type="strand" evidence="44">
    <location>
        <begin position="766"/>
        <end position="777"/>
    </location>
</feature>
<feature type="helix" evidence="44">
    <location>
        <begin position="782"/>
        <end position="784"/>
    </location>
</feature>
<feature type="strand" evidence="44">
    <location>
        <begin position="789"/>
        <end position="797"/>
    </location>
</feature>
<feature type="turn" evidence="44">
    <location>
        <begin position="806"/>
        <end position="809"/>
    </location>
</feature>
<feature type="helix" evidence="44">
    <location>
        <begin position="812"/>
        <end position="814"/>
    </location>
</feature>
<feature type="helix" evidence="44">
    <location>
        <begin position="816"/>
        <end position="822"/>
    </location>
</feature>
<feature type="helix" evidence="44">
    <location>
        <begin position="827"/>
        <end position="834"/>
    </location>
</feature>
<feature type="strand" evidence="44">
    <location>
        <begin position="841"/>
        <end position="844"/>
    </location>
</feature>
<feature type="helix" evidence="44">
    <location>
        <begin position="846"/>
        <end position="854"/>
    </location>
</feature>
<feature type="sequence conflict" description="In Ref. 5; ABW38316." evidence="27" ref="5">
    <original>N</original>
    <variation>S</variation>
    <location sequence="Q13822-3">
        <position position="23"/>
    </location>
</feature>
<feature type="sequence conflict" description="In Ref. 5; ABW38316." evidence="27" ref="5">
    <original>Q</original>
    <variation>R</variation>
    <location sequence="Q13822-3">
        <position position="291"/>
    </location>
</feature>
<feature type="sequence conflict" description="In Ref. 5; ABW38316." evidence="27" ref="5">
    <original>H</original>
    <variation>R</variation>
    <location sequence="Q13822-3">
        <position position="349"/>
    </location>
</feature>
<feature type="sequence conflict" description="In Ref. 5; ABW38316." evidence="27" ref="5">
    <original>S</original>
    <variation>P</variation>
    <location sequence="Q13822-3">
        <position position="493"/>
    </location>
</feature>
<feature type="sequence conflict" description="In Ref. 5; ABW38316." evidence="27" ref="5">
    <original>F</original>
    <variation>Y</variation>
    <location sequence="Q13822-3">
        <position position="599"/>
    </location>
</feature>
<feature type="sequence conflict" description="In Ref. 5; ABW38316." evidence="27" ref="5">
    <original>S</original>
    <variation>T</variation>
    <location sequence="Q13822-3">
        <position position="602"/>
    </location>
</feature>
<feature type="sequence conflict" description="In Ref. 5; ABW38316." evidence="27" ref="5">
    <original>P</original>
    <variation>L</variation>
    <location sequence="Q13822-3">
        <position position="654"/>
    </location>
</feature>
<accession>Q13822</accession>
<accession>A8UHA1</accession>
<accession>E9PHP7</accession>
<accession>Q13827</accession>
<accession>Q14555</accession>
<accession>Q15117</accession>
<accession>Q9UCQ8</accession>
<accession>Q9UCR0</accession>
<accession>Q9UCR1</accession>
<accession>Q9UCR2</accession>
<accession>Q9UCR3</accession>
<accession>Q9UCR4</accession>
<comment type="function">
    <text evidence="5 6 7 8 11 12 14 15 16 17 30">Secreted lysophospholipase D that hydrolyzes lysophospholipids to produce the signaling molecule lysophosphatidic acid (LPA) in extracellular fluids (PubMed:12354767, PubMed:14500380, PubMed:15769751, PubMed:26371182, PubMed:27754931). Its major substrate is lysophosphatidylcholine (PubMed:12176993, PubMed:14500380, PubMed:27754931). Can also act on sphingosylphosphorylcholine producing sphingosine-1-phosphate, a modulator of cell motility (PubMed:14500380). Can hydrolyze, in vitro, bis-pNPP, to some extent pNP-TMP, and barely ATP (PubMed:12176993, PubMed:15769751). Involved in several motility-related processes such as angiogenesis and neurite outgrowth. Acts as an angiogenic factor by stimulating migration of smooth muscle cells and microtubule formation (PubMed:11559573). Stimulates migration of melanoma cells, probably via a pertussis toxin-sensitive G protein (PubMed:1733949). May have a role in induction of parturition (PubMed:12176993). Possible involvement in cell proliferation and adipose tissue development (Probable). Required for LPA production in activated platelets, cleaves the sn-1 lysophospholipids to generate sn-1 lysophosphatidic acids containing predominantly 18:2 and 20:4 fatty acids (PubMed:21393252). Shows a preference for the sn-1 to the sn-2 isomer of 1-O-alkyl-sn-glycero-3-phosphocholine (lyso-PAF) (PubMed:21393252).</text>
</comment>
<comment type="catalytic activity">
    <reaction evidence="6 11 13 14 16 17">
        <text>a 1-O-alkyl-sn-glycero-3-phosphoethanolamine + H2O = a 1-O-alkyl-sn-glycero-3-phosphate + ethanolamine + H(+)</text>
        <dbReference type="Rhea" id="RHEA:15965"/>
        <dbReference type="ChEBI" id="CHEBI:15377"/>
        <dbReference type="ChEBI" id="CHEBI:15378"/>
        <dbReference type="ChEBI" id="CHEBI:57603"/>
        <dbReference type="ChEBI" id="CHEBI:58014"/>
        <dbReference type="ChEBI" id="CHEBI:76168"/>
        <dbReference type="EC" id="3.1.4.39"/>
    </reaction>
</comment>
<comment type="catalytic activity">
    <reaction evidence="1">
        <text>a 1-acyl-sn-glycero-3-phosphoethanolamine + H2O = a 1-acyl-sn-glycero-3-phosphate + ethanolamine + H(+)</text>
        <dbReference type="Rhea" id="RHEA:39003"/>
        <dbReference type="ChEBI" id="CHEBI:15377"/>
        <dbReference type="ChEBI" id="CHEBI:15378"/>
        <dbReference type="ChEBI" id="CHEBI:57603"/>
        <dbReference type="ChEBI" id="CHEBI:57970"/>
        <dbReference type="ChEBI" id="CHEBI:64381"/>
    </reaction>
    <physiologicalReaction direction="left-to-right" evidence="1">
        <dbReference type="Rhea" id="RHEA:39004"/>
    </physiologicalReaction>
</comment>
<comment type="catalytic activity">
    <reaction evidence="1">
        <text>1-(9Z-octadecenoyl)-sn-glycero-3-phosphoethanolamine + H2O = 1-(9Z-octadecenoyl)-sn-glycero-3-phosphate + ethanolamine + H(+)</text>
        <dbReference type="Rhea" id="RHEA:38927"/>
        <dbReference type="ChEBI" id="CHEBI:15377"/>
        <dbReference type="ChEBI" id="CHEBI:15378"/>
        <dbReference type="ChEBI" id="CHEBI:57603"/>
        <dbReference type="ChEBI" id="CHEBI:74544"/>
        <dbReference type="ChEBI" id="CHEBI:74971"/>
    </reaction>
    <physiologicalReaction direction="left-to-right" evidence="1">
        <dbReference type="Rhea" id="RHEA:38928"/>
    </physiologicalReaction>
</comment>
<comment type="catalytic activity">
    <reaction evidence="15">
        <text>a 1-O-alkyl-sn-glycero-3-phosphocholine + H2O = a 1-O-alkyl-sn-glycero-3-phosphate + choline + H(+)</text>
        <dbReference type="Rhea" id="RHEA:39927"/>
        <dbReference type="ChEBI" id="CHEBI:15354"/>
        <dbReference type="ChEBI" id="CHEBI:15377"/>
        <dbReference type="ChEBI" id="CHEBI:15378"/>
        <dbReference type="ChEBI" id="CHEBI:30909"/>
        <dbReference type="ChEBI" id="CHEBI:58014"/>
    </reaction>
    <physiologicalReaction direction="left-to-right" evidence="34">
        <dbReference type="Rhea" id="RHEA:39928"/>
    </physiologicalReaction>
</comment>
<comment type="catalytic activity">
    <reaction evidence="15">
        <text>1-O-(9Z-octadecenyl)-sn-glycero-3-phosphocholine + H2O = 1-O-(9Z-octadecenyl)-sn-glycero-3-phosphate + choline + H(+)</text>
        <dbReference type="Rhea" id="RHEA:41684"/>
        <dbReference type="ChEBI" id="CHEBI:15354"/>
        <dbReference type="ChEBI" id="CHEBI:15377"/>
        <dbReference type="ChEBI" id="CHEBI:15378"/>
        <dbReference type="ChEBI" id="CHEBI:64396"/>
        <dbReference type="ChEBI" id="CHEBI:78402"/>
    </reaction>
    <physiologicalReaction direction="left-to-right" evidence="34">
        <dbReference type="Rhea" id="RHEA:41685"/>
    </physiologicalReaction>
</comment>
<comment type="catalytic activity">
    <reaction evidence="6">
        <text>1-O-hexadecyl-sn-glycero-3-phosphocholine + H2O = 1-O-hexadecyl-sn-glycero-3-phosphate + choline + H(+)</text>
        <dbReference type="Rhea" id="RHEA:41143"/>
        <dbReference type="ChEBI" id="CHEBI:15354"/>
        <dbReference type="ChEBI" id="CHEBI:15377"/>
        <dbReference type="ChEBI" id="CHEBI:15378"/>
        <dbReference type="ChEBI" id="CHEBI:64496"/>
        <dbReference type="ChEBI" id="CHEBI:77580"/>
    </reaction>
    <physiologicalReaction direction="left-to-right" evidence="28">
        <dbReference type="Rhea" id="RHEA:41144"/>
    </physiologicalReaction>
</comment>
<comment type="catalytic activity">
    <reaction evidence="6">
        <text>a 1-O-(1Z-alkenyl)-sn-glycero-3-phosphocholine + H2O = a 1-O-(1Z-alkenyl)-sn-glycero-3-phosphate + choline + H(+)</text>
        <dbReference type="Rhea" id="RHEA:41588"/>
        <dbReference type="ChEBI" id="CHEBI:15354"/>
        <dbReference type="ChEBI" id="CHEBI:15377"/>
        <dbReference type="ChEBI" id="CHEBI:15378"/>
        <dbReference type="ChEBI" id="CHEBI:77283"/>
        <dbReference type="ChEBI" id="CHEBI:77287"/>
    </reaction>
    <physiologicalReaction direction="left-to-right" evidence="28">
        <dbReference type="Rhea" id="RHEA:41589"/>
    </physiologicalReaction>
</comment>
<comment type="catalytic activity">
    <reaction evidence="6 14">
        <text>a 1-acyl-sn-glycero-3-phosphocholine + H2O = a 1-acyl-sn-glycero-3-phosphate + choline + H(+)</text>
        <dbReference type="Rhea" id="RHEA:38995"/>
        <dbReference type="ChEBI" id="CHEBI:15354"/>
        <dbReference type="ChEBI" id="CHEBI:15377"/>
        <dbReference type="ChEBI" id="CHEBI:15378"/>
        <dbReference type="ChEBI" id="CHEBI:57970"/>
        <dbReference type="ChEBI" id="CHEBI:58168"/>
        <dbReference type="EC" id="3.1.4.4"/>
    </reaction>
    <physiologicalReaction direction="left-to-right" evidence="28 33">
        <dbReference type="Rhea" id="RHEA:38996"/>
    </physiologicalReaction>
</comment>
<comment type="catalytic activity">
    <reaction evidence="6 14">
        <text>1-dodecanoyl-sn-glycero-3-phosphocholine + H2O = 1-dodecanoyl-sn-glycerol 3-phosphate + choline + H(+)</text>
        <dbReference type="Rhea" id="RHEA:38991"/>
        <dbReference type="ChEBI" id="CHEBI:15354"/>
        <dbReference type="ChEBI" id="CHEBI:15377"/>
        <dbReference type="ChEBI" id="CHEBI:15378"/>
        <dbReference type="ChEBI" id="CHEBI:72682"/>
        <dbReference type="ChEBI" id="CHEBI:74966"/>
    </reaction>
    <physiologicalReaction direction="left-to-right" evidence="28 33">
        <dbReference type="Rhea" id="RHEA:38992"/>
    </physiologicalReaction>
</comment>
<comment type="catalytic activity">
    <reaction evidence="6 8">
        <text>1-(9Z-octadecenoyl)-sn-glycero-3-phosphocholine + H2O = 1-(9Z-octadecenoyl)-sn-glycero-3-phosphate + choline + H(+)</text>
        <dbReference type="Rhea" id="RHEA:38915"/>
        <dbReference type="ChEBI" id="CHEBI:15354"/>
        <dbReference type="ChEBI" id="CHEBI:15377"/>
        <dbReference type="ChEBI" id="CHEBI:15378"/>
        <dbReference type="ChEBI" id="CHEBI:28610"/>
        <dbReference type="ChEBI" id="CHEBI:74544"/>
    </reaction>
    <physiologicalReaction direction="left-to-right" evidence="28 29">
        <dbReference type="Rhea" id="RHEA:38916"/>
    </physiologicalReaction>
</comment>
<comment type="catalytic activity">
    <reaction evidence="6 14">
        <text>1-tetradecanoyl-sn-glycero-3-phosphocholine + H2O = 1-tetradecanoyl-sn-glycerol 3-phosphate + choline + H(+)</text>
        <dbReference type="Rhea" id="RHEA:38983"/>
        <dbReference type="ChEBI" id="CHEBI:15354"/>
        <dbReference type="ChEBI" id="CHEBI:15377"/>
        <dbReference type="ChEBI" id="CHEBI:15378"/>
        <dbReference type="ChEBI" id="CHEBI:64489"/>
        <dbReference type="ChEBI" id="CHEBI:72683"/>
    </reaction>
    <physiologicalReaction direction="left-to-right" evidence="28 33">
        <dbReference type="Rhea" id="RHEA:38984"/>
    </physiologicalReaction>
</comment>
<comment type="catalytic activity">
    <reaction evidence="6">
        <text>1-decanoyl-sn-glycero-3-phosphocholine + H2O = 1-decanoyl-sn-glycero-3-phosphate + choline + H(+)</text>
        <dbReference type="Rhea" id="RHEA:41131"/>
        <dbReference type="ChEBI" id="CHEBI:15354"/>
        <dbReference type="ChEBI" id="CHEBI:15377"/>
        <dbReference type="ChEBI" id="CHEBI:15378"/>
        <dbReference type="ChEBI" id="CHEBI:77724"/>
        <dbReference type="ChEBI" id="CHEBI:77726"/>
    </reaction>
    <physiologicalReaction direction="left-to-right" evidence="28">
        <dbReference type="Rhea" id="RHEA:41132"/>
    </physiologicalReaction>
</comment>
<comment type="catalytic activity">
    <reaction evidence="6 14">
        <text>1-octadecanoyl-sn-glycero-3-phosphocholine + H2O = 1-octadecanoyl-sn-glycero-3-phosphate + choline + H(+)</text>
        <dbReference type="Rhea" id="RHEA:38979"/>
        <dbReference type="ChEBI" id="CHEBI:15354"/>
        <dbReference type="ChEBI" id="CHEBI:15377"/>
        <dbReference type="ChEBI" id="CHEBI:15378"/>
        <dbReference type="ChEBI" id="CHEBI:73858"/>
        <dbReference type="ChEBI" id="CHEBI:74565"/>
    </reaction>
    <physiologicalReaction direction="left-to-right" evidence="28 33">
        <dbReference type="Rhea" id="RHEA:38980"/>
    </physiologicalReaction>
</comment>
<comment type="catalytic activity">
    <reaction evidence="6 14">
        <text>1-hexadecanoyl-sn-glycero-3-phosphocholine + H2O = 1-hexadecanoyl-sn-glycero-3-phosphate + choline + H(+)</text>
        <dbReference type="Rhea" id="RHEA:38975"/>
        <dbReference type="ChEBI" id="CHEBI:15354"/>
        <dbReference type="ChEBI" id="CHEBI:15377"/>
        <dbReference type="ChEBI" id="CHEBI:15378"/>
        <dbReference type="ChEBI" id="CHEBI:57518"/>
        <dbReference type="ChEBI" id="CHEBI:72998"/>
    </reaction>
    <physiologicalReaction direction="left-to-right" evidence="28 33">
        <dbReference type="Rhea" id="RHEA:38976"/>
    </physiologicalReaction>
</comment>
<comment type="catalytic activity">
    <reaction evidence="6">
        <text>1-hexanoyl-sn-glycero-3-phosphocholine + H2O = 1-hexanoyl-sn-glycero-3-phosphate + choline + H(+)</text>
        <dbReference type="Rhea" id="RHEA:41400"/>
        <dbReference type="ChEBI" id="CHEBI:15354"/>
        <dbReference type="ChEBI" id="CHEBI:15377"/>
        <dbReference type="ChEBI" id="CHEBI:15378"/>
        <dbReference type="ChEBI" id="CHEBI:78215"/>
        <dbReference type="ChEBI" id="CHEBI:78223"/>
    </reaction>
    <physiologicalReaction direction="left-to-right" evidence="28">
        <dbReference type="Rhea" id="RHEA:41401"/>
    </physiologicalReaction>
</comment>
<comment type="catalytic activity">
    <reaction evidence="6">
        <text>1-(9Z,12Z)-octadecadienoyl-sn-glycero-3-phosphocholine + H2O = 1-(9Z,12Z)-octadecadienoyl-sn-glycero-3-phosphate + choline + H(+)</text>
        <dbReference type="Rhea" id="RHEA:41135"/>
        <dbReference type="ChEBI" id="CHEBI:15354"/>
        <dbReference type="ChEBI" id="CHEBI:15377"/>
        <dbReference type="ChEBI" id="CHEBI:15378"/>
        <dbReference type="ChEBI" id="CHEBI:28733"/>
        <dbReference type="ChEBI" id="CHEBI:74547"/>
    </reaction>
    <physiologicalReaction direction="left-to-right" evidence="28">
        <dbReference type="Rhea" id="RHEA:41136"/>
    </physiologicalReaction>
</comment>
<comment type="catalytic activity">
    <reaction evidence="8">
        <text>sphing-4-enine-phosphocholine + H2O = sphing-4-enine 1-phosphate + choline + H(+)</text>
        <dbReference type="Rhea" id="RHEA:38919"/>
        <dbReference type="ChEBI" id="CHEBI:15354"/>
        <dbReference type="ChEBI" id="CHEBI:15377"/>
        <dbReference type="ChEBI" id="CHEBI:15378"/>
        <dbReference type="ChEBI" id="CHEBI:58906"/>
        <dbReference type="ChEBI" id="CHEBI:60119"/>
    </reaction>
    <physiologicalReaction direction="left-to-right" evidence="29">
        <dbReference type="Rhea" id="RHEA:38920"/>
    </physiologicalReaction>
</comment>
<comment type="catalytic activity">
    <reaction evidence="6">
        <text>1-(5Z,8Z,11Z,14Z-eicosatetraenoyl)-sn-glycero-3-phosphocholine + H2O = 1-(5Z,8Z,11Z,14Z-eicosatetraenoyl)-sn-glycero-3-phosphate + choline + H(+)</text>
        <dbReference type="Rhea" id="RHEA:41139"/>
        <dbReference type="ChEBI" id="CHEBI:15354"/>
        <dbReference type="ChEBI" id="CHEBI:15377"/>
        <dbReference type="ChEBI" id="CHEBI:15378"/>
        <dbReference type="ChEBI" id="CHEBI:74344"/>
        <dbReference type="ChEBI" id="CHEBI:74938"/>
    </reaction>
    <physiologicalReaction direction="left-to-right" evidence="28">
        <dbReference type="Rhea" id="RHEA:41140"/>
    </physiologicalReaction>
</comment>
<comment type="catalytic activity">
    <reaction evidence="15">
        <text>a 2-acyl-sn-glycero-3-phosphocholine + H2O = a 2-acyl-sn-glycerol 3-phosphate + choline + H(+)</text>
        <dbReference type="Rhea" id="RHEA:41712"/>
        <dbReference type="ChEBI" id="CHEBI:15354"/>
        <dbReference type="ChEBI" id="CHEBI:15377"/>
        <dbReference type="ChEBI" id="CHEBI:15378"/>
        <dbReference type="ChEBI" id="CHEBI:57875"/>
        <dbReference type="ChEBI" id="CHEBI:64982"/>
    </reaction>
    <physiologicalReaction direction="left-to-right" evidence="34">
        <dbReference type="Rhea" id="RHEA:41713"/>
    </physiologicalReaction>
</comment>
<comment type="catalytic activity">
    <reaction evidence="6">
        <text>a 1,2-diacyl-sn-glycero-3-phosphocholine + H2O = a 1,2-diacyl-sn-glycero-3-phosphate + choline + H(+)</text>
        <dbReference type="Rhea" id="RHEA:14445"/>
        <dbReference type="ChEBI" id="CHEBI:15354"/>
        <dbReference type="ChEBI" id="CHEBI:15377"/>
        <dbReference type="ChEBI" id="CHEBI:15378"/>
        <dbReference type="ChEBI" id="CHEBI:57643"/>
        <dbReference type="ChEBI" id="CHEBI:58608"/>
        <dbReference type="EC" id="3.1.4.4"/>
    </reaction>
    <physiologicalReaction direction="left-to-right" evidence="28">
        <dbReference type="Rhea" id="RHEA:14446"/>
    </physiologicalReaction>
</comment>
<comment type="catalytic activity">
    <reaction evidence="6">
        <text>1,2-dioctanoyl-sn-glycero-3-phosphocholine + H2O = 1,2-dioctanoyl-sn-glycero-3-phosphate + choline + H(+)</text>
        <dbReference type="Rhea" id="RHEA:41416"/>
        <dbReference type="ChEBI" id="CHEBI:15354"/>
        <dbReference type="ChEBI" id="CHEBI:15377"/>
        <dbReference type="ChEBI" id="CHEBI:15378"/>
        <dbReference type="ChEBI" id="CHEBI:78228"/>
        <dbReference type="ChEBI" id="CHEBI:78229"/>
    </reaction>
    <physiologicalReaction direction="left-to-right" evidence="28">
        <dbReference type="Rhea" id="RHEA:41417"/>
    </physiologicalReaction>
</comment>
<comment type="catalytic activity">
    <reaction evidence="6">
        <text>1,2-didecanoyl-sn-glycero-3-phosphocholine + H2O = 1,2-didecanoyl-sn-glycero-3-phosphate + choline + H(+)</text>
        <dbReference type="Rhea" id="RHEA:41412"/>
        <dbReference type="ChEBI" id="CHEBI:15354"/>
        <dbReference type="ChEBI" id="CHEBI:15377"/>
        <dbReference type="ChEBI" id="CHEBI:15378"/>
        <dbReference type="ChEBI" id="CHEBI:78226"/>
        <dbReference type="ChEBI" id="CHEBI:78227"/>
    </reaction>
    <physiologicalReaction direction="left-to-right" evidence="28">
        <dbReference type="Rhea" id="RHEA:41413"/>
    </physiologicalReaction>
</comment>
<comment type="catalytic activity">
    <reaction evidence="1">
        <text>a 1-acyl-sn-glycero-3-phospho-L-serine + H2O = a 1-acyl-sn-glycero-3-phosphate + L-serine + H(+)</text>
        <dbReference type="Rhea" id="RHEA:38999"/>
        <dbReference type="ChEBI" id="CHEBI:15377"/>
        <dbReference type="ChEBI" id="CHEBI:15378"/>
        <dbReference type="ChEBI" id="CHEBI:33384"/>
        <dbReference type="ChEBI" id="CHEBI:57970"/>
        <dbReference type="ChEBI" id="CHEBI:64379"/>
    </reaction>
    <physiologicalReaction direction="left-to-right" evidence="1">
        <dbReference type="Rhea" id="RHEA:39000"/>
    </physiologicalReaction>
</comment>
<comment type="catalytic activity">
    <reaction evidence="1">
        <text>1-(9Z-octadecenoyl)-sn-glycero-3-phospho-L-serine + H2O = 1-(9Z-octadecenoyl)-sn-glycero-3-phosphate + L-serine + H(+)</text>
        <dbReference type="Rhea" id="RHEA:38931"/>
        <dbReference type="ChEBI" id="CHEBI:15377"/>
        <dbReference type="ChEBI" id="CHEBI:15378"/>
        <dbReference type="ChEBI" id="CHEBI:33384"/>
        <dbReference type="ChEBI" id="CHEBI:74544"/>
        <dbReference type="ChEBI" id="CHEBI:74617"/>
    </reaction>
    <physiologicalReaction direction="left-to-right" evidence="1">
        <dbReference type="Rhea" id="RHEA:38932"/>
    </physiologicalReaction>
</comment>
<comment type="catalytic activity">
    <reaction evidence="15">
        <text>a 2-acyl-sn-glycero-3-phospho-L-serine + H2O = a 2-acyl-sn-glycerol 3-phosphate + L-serine + H(+)</text>
        <dbReference type="Rhea" id="RHEA:41716"/>
        <dbReference type="ChEBI" id="CHEBI:15377"/>
        <dbReference type="ChEBI" id="CHEBI:15378"/>
        <dbReference type="ChEBI" id="CHEBI:33384"/>
        <dbReference type="ChEBI" id="CHEBI:64982"/>
        <dbReference type="ChEBI" id="CHEBI:65214"/>
    </reaction>
    <physiologicalReaction direction="left-to-right" evidence="34">
        <dbReference type="Rhea" id="RHEA:41717"/>
    </physiologicalReaction>
</comment>
<comment type="cofactor">
    <cofactor evidence="16 17 18">
        <name>Zn(2+)</name>
        <dbReference type="ChEBI" id="CHEBI:29105"/>
    </cofactor>
    <text evidence="16 17 18">Binds 2 Zn(2+) ions per subunit.</text>
</comment>
<comment type="cofactor">
    <cofactor evidence="16 17 18">
        <name>Ca(2+)</name>
        <dbReference type="ChEBI" id="CHEBI:29108"/>
    </cofactor>
    <text evidence="16 17 18">Binds 1 Ca(2+) ion per subunit.</text>
</comment>
<comment type="activity regulation">
    <text evidence="31 32 33">Inhibited by lysophosphatidic acid (LPA) and sphingosine-1-phosphate (S1P). Inhibited by EDTA and EGTA (Probable).</text>
</comment>
<comment type="biophysicochemical properties">
    <kinetics>
        <KM evidence="6 13">0.5 mM for 16:0-LPC (at pH 8.5)</KM>
        <KM evidence="6 13">5.5 mM for pNP-TMP (at pH 8.5)</KM>
        <KM evidence="6 13">11.3 mM for pNppp (isoform 1)</KM>
        <KM evidence="6 13">5.7 mM for pNppp (isoform 2)</KM>
        <KM evidence="6 13">19.8 mM for pNppp (isoform 3)</KM>
        <KM evidence="15">96 uM for sn-1 lyso-PAF</KM>
        <KM evidence="15">51 uM for sn-2 lyso-PAF</KM>
        <KM evidence="8">0.1 mM for lysophosphatidylcholine</KM>
        <KM evidence="8">0.23 mM for sphingosylphosphorylcholine</KM>
        <Vmax evidence="6 13">1.9 nmol/min/ug enzyme with pNppp as substrate (isoform 1)</Vmax>
        <Vmax evidence="6 13">0.67 nmol/min/ug enzyme with pNppp as substrate (isoform 2)</Vmax>
        <Vmax evidence="6 13">1.6 nmol/min/ug enzyme with pNppp as substrate (isoform 3)</Vmax>
        <Vmax evidence="15">0.11 umol/min/mg enzyme with sn-1 lyso-PAF as substrate</Vmax>
        <Vmax evidence="15">0.025 umol/min/mg enzyme with sn-2 lyso-PAF as substrate</Vmax>
        <Vmax evidence="8">11.8 nmol/min/ug enzyme with lysophosphatidylcholine as substrate</Vmax>
        <Vmax evidence="8">6.1 nmol/min/ug enzyme with sphingosylphosphorylcholine as substrate</Vmax>
    </kinetics>
    <phDependence>
        <text evidence="6 13">Optimum pH is 9.0 (isoform 1), 8.0 (isoform 3). Isoform 1 is less sensitive to pH. Isoform 1, isoform 2 and isoform 3 all retain some activity at pH 9.5.</text>
    </phDependence>
    <temperatureDependence>
        <text evidence="6 13">Isoform 1 and isoform 3 are active from 45 to 60 degrees Celsius.</text>
    </temperatureDependence>
</comment>
<comment type="subcellular location">
    <subcellularLocation>
        <location evidence="6 11 12 16 17">Secreted</location>
    </subcellularLocation>
</comment>
<comment type="alternative products">
    <event type="alternative splicing"/>
    <isoform>
        <id>Q13822-1</id>
        <name>1</name>
        <name>ATXter</name>
        <name>Beta</name>
        <sequence type="displayed"/>
    </isoform>
    <isoform>
        <id>Q13822-2</id>
        <name>2</name>
        <name>ATXmel</name>
        <name>Alpha</name>
        <sequence type="described" ref="VSP_006750"/>
    </isoform>
    <isoform>
        <id>Q13822-3</id>
        <name>3</name>
        <name>Gamma</name>
        <sequence type="described" ref="VSP_036398"/>
    </isoform>
</comment>
<comment type="tissue specificity">
    <text evidence="6 13 16 20 21">Detected in blood plasma (at protein level) (PubMed:12176993, PubMed:26371182). Predominantly expressed in brain, placenta, ovary, and small intestine. Expressed in a number of carcinomas such as hepatocellular and prostate carcinoma, neuroblastoma and non-small-cell lung cancer. Expressed in body fluids such as plasma, cerebral spinal fluid (CSF), saliva, follicular and amniotic fluids. Not detected in leukocytes. Isoform 1 is more highly expressed in peripheral tissues than in the central nervous system (CNS). Adipocytes only express isoform 1. Isoform 3 is more highly expressed in the brain than in peripheral tissues.</text>
</comment>
<comment type="induction">
    <text evidence="10">Up-regulated in massively obese subjects with glucose intolerance, and during adipogenesis.</text>
</comment>
<comment type="domain">
    <text evidence="2">The nuclease-like domain is most probably catalytically inactive as residues that are essential for catalysis in the DNA/RNA non-specific endonucleases are not conserved. However, it is required for the stability of the protein and the catalytic activity born by the Phosphodiesterase domain.</text>
</comment>
<comment type="PTM">
    <text evidence="2">N-glycosylation, but not furin-cleavage, plays a critical role on secretion and on lysoPLD activity.</text>
</comment>
<comment type="PTM">
    <text evidence="2">The interdomain disulfide bond between Cys-414 and Cys-806 is essential for catalytic activity.</text>
</comment>
<comment type="similarity">
    <text evidence="27">Belongs to the nucleotide pyrophosphatase/phosphodiesterase family.</text>
</comment>
<comment type="online information" name="Atlas of Genetics and Cytogenetics in Oncology and Haematology">
    <link uri="https://atlasgeneticsoncology.org/gene/40455/ENPP2"/>
</comment>
<dbReference type="EC" id="3.1.4.39" evidence="6 11 13 14 16"/>
<dbReference type="EC" id="3.1.4.4" evidence="6 14"/>
<dbReference type="EMBL" id="L35594">
    <property type="protein sequence ID" value="AAA64785.1"/>
    <property type="molecule type" value="mRNA"/>
</dbReference>
<dbReference type="EMBL" id="D45421">
    <property type="protein sequence ID" value="BAA08260.1"/>
    <property type="molecule type" value="mRNA"/>
</dbReference>
<dbReference type="EMBL" id="D45914">
    <property type="protein sequence ID" value="BAA08342.1"/>
    <property type="molecule type" value="Genomic_DNA"/>
</dbReference>
<dbReference type="EMBL" id="L46720">
    <property type="protein sequence ID" value="AAB00855.1"/>
    <property type="molecule type" value="mRNA"/>
</dbReference>
<dbReference type="EMBL" id="EU131011">
    <property type="protein sequence ID" value="ABW38316.2"/>
    <property type="molecule type" value="mRNA"/>
</dbReference>
<dbReference type="EMBL" id="AC099818">
    <property type="status" value="NOT_ANNOTATED_CDS"/>
    <property type="molecule type" value="Genomic_DNA"/>
</dbReference>
<dbReference type="EMBL" id="AC107960">
    <property type="status" value="NOT_ANNOTATED_CDS"/>
    <property type="molecule type" value="Genomic_DNA"/>
</dbReference>
<dbReference type="EMBL" id="BC034961">
    <property type="protein sequence ID" value="AAH34961.1"/>
    <property type="molecule type" value="mRNA"/>
</dbReference>
<dbReference type="CCDS" id="CCDS34936.1">
    <molecule id="Q13822-1"/>
</dbReference>
<dbReference type="CCDS" id="CCDS47914.1">
    <molecule id="Q13822-3"/>
</dbReference>
<dbReference type="CCDS" id="CCDS6329.1">
    <molecule id="Q13822-2"/>
</dbReference>
<dbReference type="PIR" id="A55144">
    <property type="entry name" value="A55144"/>
</dbReference>
<dbReference type="RefSeq" id="NP_001035181.1">
    <molecule id="Q13822-1"/>
    <property type="nucleotide sequence ID" value="NM_001040092.3"/>
</dbReference>
<dbReference type="RefSeq" id="NP_001124335.1">
    <molecule id="Q13822-3"/>
    <property type="nucleotide sequence ID" value="NM_001130863.3"/>
</dbReference>
<dbReference type="RefSeq" id="NP_006200.3">
    <molecule id="Q13822-2"/>
    <property type="nucleotide sequence ID" value="NM_006209.4"/>
</dbReference>
<dbReference type="PDB" id="4ZG6">
    <property type="method" value="X-ray"/>
    <property type="resolution" value="1.80 A"/>
    <property type="chains" value="A/B=17-863"/>
</dbReference>
<dbReference type="PDB" id="4ZG7">
    <property type="method" value="X-ray"/>
    <property type="resolution" value="1.75 A"/>
    <property type="chains" value="A=55-860"/>
</dbReference>
<dbReference type="PDB" id="4ZG9">
    <property type="method" value="X-ray"/>
    <property type="resolution" value="2.95 A"/>
    <property type="chains" value="A/B=1-863"/>
</dbReference>
<dbReference type="PDB" id="4ZGA">
    <property type="method" value="X-ray"/>
    <property type="resolution" value="2.60 A"/>
    <property type="chains" value="A=1-863"/>
</dbReference>
<dbReference type="PDB" id="5KXA">
    <property type="method" value="X-ray"/>
    <property type="resolution" value="2.59 A"/>
    <property type="chains" value="A=1-863"/>
</dbReference>
<dbReference type="PDB" id="5M7M">
    <property type="method" value="X-ray"/>
    <property type="resolution" value="2.70 A"/>
    <property type="chains" value="A=1-863"/>
</dbReference>
<dbReference type="PDB" id="5MHP">
    <property type="method" value="X-ray"/>
    <property type="resolution" value="2.43 A"/>
    <property type="chains" value="A=1-863"/>
</dbReference>
<dbReference type="PDB" id="8C3O">
    <property type="method" value="X-ray"/>
    <property type="resolution" value="2.47 A"/>
    <property type="chains" value="A/B=1-863"/>
</dbReference>
<dbReference type="PDB" id="8C3P">
    <property type="method" value="X-ray"/>
    <property type="resolution" value="2.38 A"/>
    <property type="chains" value="A/B=1-863"/>
</dbReference>
<dbReference type="PDBsum" id="4ZG6"/>
<dbReference type="PDBsum" id="4ZG7"/>
<dbReference type="PDBsum" id="4ZG9"/>
<dbReference type="PDBsum" id="4ZGA"/>
<dbReference type="PDBsum" id="5KXA"/>
<dbReference type="PDBsum" id="5M7M"/>
<dbReference type="PDBsum" id="5MHP"/>
<dbReference type="PDBsum" id="8C3O"/>
<dbReference type="PDBsum" id="8C3P"/>
<dbReference type="SMR" id="Q13822"/>
<dbReference type="BioGRID" id="111194">
    <property type="interactions" value="9"/>
</dbReference>
<dbReference type="FunCoup" id="Q13822">
    <property type="interactions" value="401"/>
</dbReference>
<dbReference type="IntAct" id="Q13822">
    <property type="interactions" value="5"/>
</dbReference>
<dbReference type="MINT" id="Q13822"/>
<dbReference type="STRING" id="9606.ENSP00000259486"/>
<dbReference type="BindingDB" id="Q13822"/>
<dbReference type="ChEMBL" id="CHEMBL3691"/>
<dbReference type="DrugBank" id="DB18203">
    <property type="generic name" value="Cudetaxestat"/>
</dbReference>
<dbReference type="DrugCentral" id="Q13822"/>
<dbReference type="GuidetoPHARMACOLOGY" id="2901"/>
<dbReference type="SwissLipids" id="SLP:000000393"/>
<dbReference type="SwissLipids" id="SLP:000000641">
    <molecule id="Q13822-1"/>
</dbReference>
<dbReference type="GlyConnect" id="1197">
    <property type="glycosylation" value="4 N-Linked glycans (1 site)"/>
</dbReference>
<dbReference type="GlyCosmos" id="Q13822">
    <property type="glycosylation" value="4 sites, 4 glycans"/>
</dbReference>
<dbReference type="GlyGen" id="Q13822">
    <property type="glycosylation" value="5 sites, 16 N-linked glycans (2 sites)"/>
</dbReference>
<dbReference type="iPTMnet" id="Q13822"/>
<dbReference type="PhosphoSitePlus" id="Q13822"/>
<dbReference type="BioMuta" id="ENPP2"/>
<dbReference type="DMDM" id="290457674"/>
<dbReference type="jPOST" id="Q13822"/>
<dbReference type="MassIVE" id="Q13822"/>
<dbReference type="PaxDb" id="9606-ENSP00000259486"/>
<dbReference type="PeptideAtlas" id="Q13822"/>
<dbReference type="ProteomicsDB" id="20576"/>
<dbReference type="ProteomicsDB" id="59692">
    <molecule id="Q13822-1"/>
</dbReference>
<dbReference type="ProteomicsDB" id="59693">
    <molecule id="Q13822-2"/>
</dbReference>
<dbReference type="ProteomicsDB" id="59694">
    <molecule id="Q13822-3"/>
</dbReference>
<dbReference type="Antibodypedia" id="13653">
    <property type="antibodies" value="497 antibodies from 38 providers"/>
</dbReference>
<dbReference type="DNASU" id="5168"/>
<dbReference type="Ensembl" id="ENST00000075322.11">
    <molecule id="Q13822-1"/>
    <property type="protein sequence ID" value="ENSP00000075322.6"/>
    <property type="gene ID" value="ENSG00000136960.13"/>
</dbReference>
<dbReference type="Ensembl" id="ENST00000259486.10">
    <molecule id="Q13822-2"/>
    <property type="protein sequence ID" value="ENSP00000259486.6"/>
    <property type="gene ID" value="ENSG00000136960.13"/>
</dbReference>
<dbReference type="Ensembl" id="ENST00000522826.5">
    <molecule id="Q13822-3"/>
    <property type="protein sequence ID" value="ENSP00000428291.1"/>
    <property type="gene ID" value="ENSG00000136960.13"/>
</dbReference>
<dbReference type="GeneID" id="5168"/>
<dbReference type="KEGG" id="hsa:5168"/>
<dbReference type="MANE-Select" id="ENST00000075322.11">
    <property type="protein sequence ID" value="ENSP00000075322.6"/>
    <property type="RefSeq nucleotide sequence ID" value="NM_001040092.3"/>
    <property type="RefSeq protein sequence ID" value="NP_001035181.1"/>
</dbReference>
<dbReference type="UCSC" id="uc003yos.3">
    <molecule id="Q13822-1"/>
    <property type="organism name" value="human"/>
</dbReference>
<dbReference type="AGR" id="HGNC:3357"/>
<dbReference type="CTD" id="5168"/>
<dbReference type="DisGeNET" id="5168"/>
<dbReference type="GeneCards" id="ENPP2"/>
<dbReference type="HGNC" id="HGNC:3357">
    <property type="gene designation" value="ENPP2"/>
</dbReference>
<dbReference type="HPA" id="ENSG00000136960">
    <property type="expression patterns" value="Tissue enriched (choroid)"/>
</dbReference>
<dbReference type="MIM" id="601060">
    <property type="type" value="gene"/>
</dbReference>
<dbReference type="neXtProt" id="NX_Q13822"/>
<dbReference type="OpenTargets" id="ENSG00000136960"/>
<dbReference type="PharmGKB" id="PA27792"/>
<dbReference type="VEuPathDB" id="HostDB:ENSG00000136960"/>
<dbReference type="eggNOG" id="KOG2645">
    <property type="taxonomic scope" value="Eukaryota"/>
</dbReference>
<dbReference type="GeneTree" id="ENSGT00940000155778"/>
<dbReference type="HOGENOM" id="CLU_012256_0_0_1"/>
<dbReference type="InParanoid" id="Q13822"/>
<dbReference type="OMA" id="NICLGYT"/>
<dbReference type="OrthoDB" id="415411at2759"/>
<dbReference type="PAN-GO" id="Q13822">
    <property type="GO annotations" value="7 GO annotations based on evolutionary models"/>
</dbReference>
<dbReference type="PhylomeDB" id="Q13822"/>
<dbReference type="TreeFam" id="TF330032"/>
<dbReference type="BioCyc" id="MetaCyc:HS06258-MONOMER"/>
<dbReference type="BRENDA" id="3.1.4.39">
    <property type="organism ID" value="2681"/>
</dbReference>
<dbReference type="PathwayCommons" id="Q13822"/>
<dbReference type="Reactome" id="R-HSA-199220">
    <property type="pathway name" value="Vitamin B5 (pantothenate) metabolism"/>
</dbReference>
<dbReference type="SABIO-RK" id="Q13822"/>
<dbReference type="SignaLink" id="Q13822"/>
<dbReference type="BioGRID-ORCS" id="5168">
    <property type="hits" value="17 hits in 1154 CRISPR screens"/>
</dbReference>
<dbReference type="ChiTaRS" id="ENPP2">
    <property type="organism name" value="human"/>
</dbReference>
<dbReference type="EvolutionaryTrace" id="Q13822"/>
<dbReference type="GeneWiki" id="Autotaxin"/>
<dbReference type="GenomeRNAi" id="5168"/>
<dbReference type="Pharos" id="Q13822">
    <property type="development level" value="Tchem"/>
</dbReference>
<dbReference type="PRO" id="PR:Q13822"/>
<dbReference type="Proteomes" id="UP000005640">
    <property type="component" value="Chromosome 8"/>
</dbReference>
<dbReference type="RNAct" id="Q13822">
    <property type="molecule type" value="protein"/>
</dbReference>
<dbReference type="Bgee" id="ENSG00000136960">
    <property type="expression patterns" value="Expressed in pigmented layer of retina and 208 other cell types or tissues"/>
</dbReference>
<dbReference type="ExpressionAtlas" id="Q13822">
    <property type="expression patterns" value="baseline and differential"/>
</dbReference>
<dbReference type="GO" id="GO:0005615">
    <property type="term" value="C:extracellular space"/>
    <property type="evidence" value="ECO:0000314"/>
    <property type="project" value="UniProtKB"/>
</dbReference>
<dbReference type="GO" id="GO:0005886">
    <property type="term" value="C:plasma membrane"/>
    <property type="evidence" value="ECO:0000304"/>
    <property type="project" value="ProtInc"/>
</dbReference>
<dbReference type="GO" id="GO:0047391">
    <property type="term" value="F:alkylglycerophosphoethanolamine phosphodiesterase activity"/>
    <property type="evidence" value="ECO:0000318"/>
    <property type="project" value="GO_Central"/>
</dbReference>
<dbReference type="GO" id="GO:0005509">
    <property type="term" value="F:calcium ion binding"/>
    <property type="evidence" value="ECO:0000314"/>
    <property type="project" value="UniProtKB"/>
</dbReference>
<dbReference type="GO" id="GO:0016787">
    <property type="term" value="F:hydrolase activity"/>
    <property type="evidence" value="ECO:0000304"/>
    <property type="project" value="UniProtKB"/>
</dbReference>
<dbReference type="GO" id="GO:0004622">
    <property type="term" value="F:lysophospholipase activity"/>
    <property type="evidence" value="ECO:0000314"/>
    <property type="project" value="UniProtKB"/>
</dbReference>
<dbReference type="GO" id="GO:0003676">
    <property type="term" value="F:nucleic acid binding"/>
    <property type="evidence" value="ECO:0007669"/>
    <property type="project" value="InterPro"/>
</dbReference>
<dbReference type="GO" id="GO:0004528">
    <property type="term" value="F:phosphodiesterase I activity"/>
    <property type="evidence" value="ECO:0000318"/>
    <property type="project" value="GO_Central"/>
</dbReference>
<dbReference type="GO" id="GO:0004630">
    <property type="term" value="F:phospholipase D activity"/>
    <property type="evidence" value="ECO:0007669"/>
    <property type="project" value="RHEA"/>
</dbReference>
<dbReference type="GO" id="GO:0030247">
    <property type="term" value="F:polysaccharide binding"/>
    <property type="evidence" value="ECO:0007669"/>
    <property type="project" value="InterPro"/>
</dbReference>
<dbReference type="GO" id="GO:0005044">
    <property type="term" value="F:scavenger receptor activity"/>
    <property type="evidence" value="ECO:0007669"/>
    <property type="project" value="InterPro"/>
</dbReference>
<dbReference type="GO" id="GO:0008270">
    <property type="term" value="F:zinc ion binding"/>
    <property type="evidence" value="ECO:0000314"/>
    <property type="project" value="UniProtKB"/>
</dbReference>
<dbReference type="GO" id="GO:0048870">
    <property type="term" value="P:cell motility"/>
    <property type="evidence" value="ECO:0000304"/>
    <property type="project" value="UniProtKB"/>
</dbReference>
<dbReference type="GO" id="GO:0006935">
    <property type="term" value="P:chemotaxis"/>
    <property type="evidence" value="ECO:0000303"/>
    <property type="project" value="UniProtKB"/>
</dbReference>
<dbReference type="GO" id="GO:0006955">
    <property type="term" value="P:immune response"/>
    <property type="evidence" value="ECO:0007669"/>
    <property type="project" value="InterPro"/>
</dbReference>
<dbReference type="GO" id="GO:0034638">
    <property type="term" value="P:phosphatidylcholine catabolic process"/>
    <property type="evidence" value="ECO:0000314"/>
    <property type="project" value="UniProtKB"/>
</dbReference>
<dbReference type="GO" id="GO:0009395">
    <property type="term" value="P:phospholipid catabolic process"/>
    <property type="evidence" value="ECO:0000314"/>
    <property type="project" value="UniProtKB"/>
</dbReference>
<dbReference type="GO" id="GO:0010634">
    <property type="term" value="P:positive regulation of epithelial cell migration"/>
    <property type="evidence" value="ECO:0000315"/>
    <property type="project" value="UniProtKB"/>
</dbReference>
<dbReference type="GO" id="GO:2000394">
    <property type="term" value="P:positive regulation of lamellipodium morphogenesis"/>
    <property type="evidence" value="ECO:0000316"/>
    <property type="project" value="UniProtKB"/>
</dbReference>
<dbReference type="GO" id="GO:0050731">
    <property type="term" value="P:positive regulation of peptidyl-tyrosine phosphorylation"/>
    <property type="evidence" value="ECO:0000314"/>
    <property type="project" value="UniProtKB"/>
</dbReference>
<dbReference type="GO" id="GO:0030334">
    <property type="term" value="P:regulation of cell migration"/>
    <property type="evidence" value="ECO:0000314"/>
    <property type="project" value="UniProtKB"/>
</dbReference>
<dbReference type="GO" id="GO:0030149">
    <property type="term" value="P:sphingolipid catabolic process"/>
    <property type="evidence" value="ECO:0000314"/>
    <property type="project" value="UniProtKB"/>
</dbReference>
<dbReference type="CDD" id="cd16018">
    <property type="entry name" value="Enpp"/>
    <property type="match status" value="1"/>
</dbReference>
<dbReference type="CDD" id="cd00091">
    <property type="entry name" value="NUC"/>
    <property type="match status" value="1"/>
</dbReference>
<dbReference type="FunFam" id="3.40.570.10:FF:000001">
    <property type="entry name" value="Ectonucleotide pyrophosphatase/phosphodiesterase family member 2"/>
    <property type="match status" value="1"/>
</dbReference>
<dbReference type="FunFam" id="3.40.720.10:FF:000006">
    <property type="entry name" value="Ectonucleotide pyrophosphatase/phosphodiesterase family member 2"/>
    <property type="match status" value="1"/>
</dbReference>
<dbReference type="FunFam" id="4.10.410.20:FF:000001">
    <property type="entry name" value="Ectonucleotide pyrophosphatase/phosphodiesterase family member 2"/>
    <property type="match status" value="1"/>
</dbReference>
<dbReference type="FunFam" id="4.10.410.20:FF:000002">
    <property type="entry name" value="Ectonucleotide pyrophosphatase/phosphodiesterase family member 2"/>
    <property type="match status" value="1"/>
</dbReference>
<dbReference type="Gene3D" id="4.10.410.20">
    <property type="match status" value="2"/>
</dbReference>
<dbReference type="Gene3D" id="3.40.720.10">
    <property type="entry name" value="Alkaline Phosphatase, subunit A"/>
    <property type="match status" value="1"/>
</dbReference>
<dbReference type="Gene3D" id="3.40.570.10">
    <property type="entry name" value="Extracellular Endonuclease, subunit A"/>
    <property type="match status" value="1"/>
</dbReference>
<dbReference type="InterPro" id="IPR017850">
    <property type="entry name" value="Alkaline_phosphatase_core_sf"/>
</dbReference>
<dbReference type="InterPro" id="IPR044929">
    <property type="entry name" value="DNA/RNA_non-sp_Endonuclease_sf"/>
</dbReference>
<dbReference type="InterPro" id="IPR001604">
    <property type="entry name" value="Endo_G_ENPP1-like_dom"/>
</dbReference>
<dbReference type="InterPro" id="IPR020821">
    <property type="entry name" value="ENPP1-3/EXOG-like_nuc-like"/>
</dbReference>
<dbReference type="InterPro" id="IPR044925">
    <property type="entry name" value="His-Me_finger_sf"/>
</dbReference>
<dbReference type="InterPro" id="IPR002591">
    <property type="entry name" value="Phosphodiest/P_Trfase"/>
</dbReference>
<dbReference type="InterPro" id="IPR020436">
    <property type="entry name" value="SMB_chordata"/>
</dbReference>
<dbReference type="InterPro" id="IPR036024">
    <property type="entry name" value="Somatomedin_B-like_dom_sf"/>
</dbReference>
<dbReference type="InterPro" id="IPR001212">
    <property type="entry name" value="Somatomedin_B_dom"/>
</dbReference>
<dbReference type="PANTHER" id="PTHR10151">
    <property type="entry name" value="ECTONUCLEOTIDE PYROPHOSPHATASE/PHOSPHODIESTERASE"/>
    <property type="match status" value="1"/>
</dbReference>
<dbReference type="PANTHER" id="PTHR10151:SF21">
    <property type="entry name" value="ECTONUCLEOTIDE PYROPHOSPHATASE_PHOSPHODIESTERASE FAMILY MEMBER 2"/>
    <property type="match status" value="1"/>
</dbReference>
<dbReference type="Pfam" id="PF01223">
    <property type="entry name" value="Endonuclease_NS"/>
    <property type="match status" value="1"/>
</dbReference>
<dbReference type="Pfam" id="PF01663">
    <property type="entry name" value="Phosphodiest"/>
    <property type="match status" value="1"/>
</dbReference>
<dbReference type="Pfam" id="PF01033">
    <property type="entry name" value="Somatomedin_B"/>
    <property type="match status" value="2"/>
</dbReference>
<dbReference type="PRINTS" id="PR00022">
    <property type="entry name" value="SOMATOMEDINB"/>
</dbReference>
<dbReference type="SMART" id="SM00892">
    <property type="entry name" value="Endonuclease_NS"/>
    <property type="match status" value="1"/>
</dbReference>
<dbReference type="SMART" id="SM00477">
    <property type="entry name" value="NUC"/>
    <property type="match status" value="1"/>
</dbReference>
<dbReference type="SMART" id="SM00201">
    <property type="entry name" value="SO"/>
    <property type="match status" value="2"/>
</dbReference>
<dbReference type="SUPFAM" id="SSF53649">
    <property type="entry name" value="Alkaline phosphatase-like"/>
    <property type="match status" value="1"/>
</dbReference>
<dbReference type="SUPFAM" id="SSF54060">
    <property type="entry name" value="His-Me finger endonucleases"/>
    <property type="match status" value="1"/>
</dbReference>
<dbReference type="SUPFAM" id="SSF90188">
    <property type="entry name" value="Somatomedin B domain"/>
    <property type="match status" value="2"/>
</dbReference>
<dbReference type="PROSITE" id="PS00524">
    <property type="entry name" value="SMB_1"/>
    <property type="match status" value="2"/>
</dbReference>
<dbReference type="PROSITE" id="PS50958">
    <property type="entry name" value="SMB_2"/>
    <property type="match status" value="2"/>
</dbReference>
<keyword id="KW-0002">3D-structure</keyword>
<keyword id="KW-0025">Alternative splicing</keyword>
<keyword id="KW-0106">Calcium</keyword>
<keyword id="KW-0145">Chemotaxis</keyword>
<keyword id="KW-0165">Cleavage on pair of basic residues</keyword>
<keyword id="KW-0903">Direct protein sequencing</keyword>
<keyword id="KW-1015">Disulfide bond</keyword>
<keyword id="KW-0325">Glycoprotein</keyword>
<keyword id="KW-0378">Hydrolase</keyword>
<keyword id="KW-0442">Lipid degradation</keyword>
<keyword id="KW-0443">Lipid metabolism</keyword>
<keyword id="KW-0479">Metal-binding</keyword>
<keyword id="KW-0550">Obesity</keyword>
<keyword id="KW-1267">Proteomics identification</keyword>
<keyword id="KW-1185">Reference proteome</keyword>
<keyword id="KW-0677">Repeat</keyword>
<keyword id="KW-0964">Secreted</keyword>
<keyword id="KW-0732">Signal</keyword>
<keyword id="KW-0862">Zinc</keyword>